<accession>P35968</accession>
<accession>A2RRS0</accession>
<accession>B5A925</accession>
<accession>C5IFA0</accession>
<accession>O60723</accession>
<accession>Q14178</accession>
<comment type="function">
    <text evidence="9 10 12 13 15 17 18 19 22 25 28 30 36 37 38 40 41 43 48 51 52 53 54">Tyrosine-protein kinase that acts as a cell-surface receptor for VEGFA, VEGFC and VEGFD. Plays an essential role in the regulation of angiogenesis, vascular development, vascular permeability, and embryonic hematopoiesis. Promotes proliferation, survival, migration and differentiation of endothelial cells. Promotes reorganization of the actin cytoskeleton. Isoforms lacking a transmembrane domain, such as isoform 2 and isoform 3, may function as decoy receptors for VEGFA, VEGFC and/or VEGFD. Isoform 2 plays an important role as negative regulator of VEGFA- and VEGFC-mediated lymphangiogenesis by limiting the amount of free VEGFA and/or VEGFC and preventing their binding to FLT4. Modulates FLT1 and FLT4 signaling by forming heterodimers. Binding of vascular growth factors to isoform 1 leads to the activation of several signaling cascades. Activation of PLCG1 leads to the production of the cellular signaling molecules diacylglycerol and inositol 1,4,5-trisphosphate and the activation of protein kinase C. Mediates activation of MAPK1/ERK2, MAPK3/ERK1 and the MAP kinase signaling pathway, as well as of the AKT1 signaling pathway. Mediates phosphorylation of PIK3R1, the regulatory subunit of phosphatidylinositol 3-kinase, reorganization of the actin cytoskeleton and activation of PTK2/FAK1. Required for VEGFA-mediated induction of NOS2 and NOS3, leading to the production of the signaling molecule nitric oxide (NO) by endothelial cells. Phosphorylates PLCG1. Promotes phosphorylation of FYN, NCK1, NOS3, PIK3R1, PTK2/FAK1 and SRC.</text>
</comment>
<comment type="catalytic activity">
    <reaction evidence="6 8 9">
        <text>L-tyrosyl-[protein] + ATP = O-phospho-L-tyrosyl-[protein] + ADP + H(+)</text>
        <dbReference type="Rhea" id="RHEA:10596"/>
        <dbReference type="Rhea" id="RHEA-COMP:10136"/>
        <dbReference type="Rhea" id="RHEA-COMP:20101"/>
        <dbReference type="ChEBI" id="CHEBI:15378"/>
        <dbReference type="ChEBI" id="CHEBI:30616"/>
        <dbReference type="ChEBI" id="CHEBI:46858"/>
        <dbReference type="ChEBI" id="CHEBI:61978"/>
        <dbReference type="ChEBI" id="CHEBI:456216"/>
        <dbReference type="EC" id="2.7.10.1"/>
    </reaction>
</comment>
<comment type="activity regulation">
    <text evidence="8 9 19 44">Present in an inactive conformation in the absence of bound ligand. Binding of VEGFA, VEGFC or VEGFD leads to dimerization and activation by autophosphorylation on tyrosine residues. Inhibited by the small molecule PTK inhibitor SU5614 ((3Z)-5-Chloro-3-[(3,5-dimethyl-1H-pyrrol-2-yl)methylene]-1,3-dihydro-2H-indol-2-one). May be regulated by hydrogen sulfide (H(2)S) levels via a H(2)S-sensitive intracellular disulfide bond.</text>
</comment>
<comment type="subunit">
    <text evidence="9 15 16 17 18 19 21 22 25 27 30 31 34 36 38 39 40 41 42 43 45 46 47 48 49 50 52">Homodimer in the presence of bound dimeric VEGFA, VEGFC or VEGFD ligands; monomeric in the absence of bound ligands. Can also form heterodimers with FLT1/VEGFR1 and KDR/VEGFR2. Interacts (tyrosine phosphorylated) with LFYN, NCK1, PLCG1. Interacts (tyrosine-phosphorylated active form preferentially) with DAB2IP (via C2 domain and active form preferentially); the interaction occurs at the late phase of VEGFA response and inhibits KDR/VEGFR2 activity. Interacts with SHBSH2D2A/TSAD, GRB2, MYOF, CBL and PDCD6. Interacts (via C-terminus domain) with ERN1 (via kinase domain); the interaction is facilitated in a XBP1 isoform 1- and vascular endothelial growth factor (VEGF)-dependent manner in endothelial cells (PubMed:23529610). Interacts (via juxtamembrane region) with chaperone PDCL3 (via thioredoxin fold region); the interaction leads to increased KDR/VEGFR2 abundance through inhibition of its ubiquitination and degradation (PubMed:23792958, PubMed:26059764). Interacts (tyrosine phosphorylated) with CCDC88A/GIV (via SH2-like region); binding requires autophosphorylation of the KDR/VEGFR2 C-terminal region (PubMed:25187647). Interacts with isoform 2 of BSG (PubMed:25825981). Interacts with SLC31A1; this interaction is induced upon VEGFA stimulation leading to SLC31A1 and KDR subsequent co-internalization to early endosomes, thereby activating KDR downstream signaling in endothelial cells (PubMed:35027734).</text>
</comment>
<comment type="subunit">
    <text evidence="11">(Microbial infection) Interacts with HIV-1 Tat.</text>
</comment>
<comment type="interaction">
    <interactant intactId="EBI-1005487">
        <id>P35968</id>
    </interactant>
    <interactant intactId="EBI-1005467">
        <id>P35916</id>
        <label>FLT4</label>
    </interactant>
    <organismsDiffer>false</organismsDiffer>
    <experiments>5</experiments>
</comment>
<comment type="interaction">
    <interactant intactId="EBI-1005487">
        <id>P35968</id>
    </interactant>
    <interactant intactId="EBI-944395">
        <id>O60565</id>
        <label>GREM1</label>
    </interactant>
    <organismsDiffer>false</organismsDiffer>
    <experiments>4</experiments>
</comment>
<comment type="interaction">
    <interactant intactId="EBI-1005487">
        <id>P35968</id>
    </interactant>
    <interactant intactId="EBI-947664">
        <id>P98160</id>
        <label>HSPG2</label>
    </interactant>
    <organismsDiffer>false</organismsDiffer>
    <experiments>5</experiments>
</comment>
<comment type="interaction">
    <interactant intactId="EBI-1005487">
        <id>P35968</id>
    </interactant>
    <interactant intactId="EBI-6896259">
        <id>PRO_0000391621</id>
        <label>HSPG2</label>
        <dbReference type="UniProtKB" id="P98160"/>
    </interactant>
    <organismsDiffer>false</organismsDiffer>
    <experiments>2</experiments>
</comment>
<comment type="interaction">
    <interactant intactId="EBI-1005487">
        <id>P35968</id>
    </interactant>
    <interactant intactId="EBI-6896607">
        <id>PRO_0000391622</id>
        <label>HSPG2</label>
        <dbReference type="UniProtKB" id="P98160"/>
    </interactant>
    <organismsDiffer>false</organismsDiffer>
    <experiments>2</experiments>
</comment>
<comment type="interaction">
    <interactant intactId="EBI-1005487">
        <id>P35968</id>
    </interactant>
    <interactant intactId="EBI-702960">
        <id>P17301</id>
        <label>ITGA2</label>
    </interactant>
    <organismsDiffer>false</organismsDiffer>
    <experiments>2</experiments>
</comment>
<comment type="interaction">
    <interactant intactId="EBI-1005487">
        <id>P35968</id>
    </interactant>
    <interactant intactId="EBI-1005487">
        <id>P35968</id>
        <label>KDR</label>
    </interactant>
    <organismsDiffer>false</organismsDiffer>
    <experiments>4</experiments>
</comment>
<comment type="interaction">
    <interactant intactId="EBI-1005487">
        <id>P35968</id>
    </interactant>
    <interactant intactId="EBI-1048875">
        <id>P09382</id>
        <label>LGALS1</label>
    </interactant>
    <organismsDiffer>false</organismsDiffer>
    <experiments>3</experiments>
</comment>
<comment type="interaction">
    <interactant intactId="EBI-1005487">
        <id>P35968</id>
    </interactant>
    <interactant intactId="EBI-1039152">
        <id>P08581</id>
        <label>MET</label>
    </interactant>
    <organismsDiffer>false</organismsDiffer>
    <experiments>3</experiments>
</comment>
<comment type="interaction">
    <interactant intactId="EBI-1005487">
        <id>P35968</id>
    </interactant>
    <interactant intactId="EBI-389883">
        <id>P16333</id>
        <label>NCK1</label>
    </interactant>
    <organismsDiffer>false</organismsDiffer>
    <experiments>3</experiments>
</comment>
<comment type="interaction">
    <interactant intactId="EBI-1005487">
        <id>P35968</id>
    </interactant>
    <interactant intactId="EBI-1187100">
        <id>O14786</id>
        <label>NRP1</label>
    </interactant>
    <organismsDiffer>false</organismsDiffer>
    <experiments>2</experiments>
</comment>
<comment type="interaction">
    <interactant intactId="EBI-1005487">
        <id>P35968</id>
    </interactant>
    <interactant intactId="EBI-352915">
        <id>O75340</id>
        <label>PDCD6</label>
    </interactant>
    <organismsDiffer>false</organismsDiffer>
    <experiments>4</experiments>
</comment>
<comment type="interaction">
    <interactant intactId="EBI-1005487">
        <id>P35968</id>
    </interactant>
    <interactant intactId="EBI-641237">
        <id>P09619</id>
        <label>PDGFRB</label>
    </interactant>
    <organismsDiffer>false</organismsDiffer>
    <experiments>2</experiments>
</comment>
<comment type="interaction">
    <interactant intactId="EBI-1005487">
        <id>P35968</id>
    </interactant>
    <interactant intactId="EBI-78260">
        <id>P29350</id>
        <label>PTPN6</label>
    </interactant>
    <organismsDiffer>false</organismsDiffer>
    <experiments>2</experiments>
</comment>
<comment type="interaction">
    <interactant intactId="EBI-1005487">
        <id>P35968</id>
    </interactant>
    <interactant intactId="EBI-2264500">
        <id>Q12913</id>
        <label>PTPRJ</label>
    </interactant>
    <organismsDiffer>false</organismsDiffer>
    <experiments>4</experiments>
</comment>
<comment type="interaction">
    <interactant intactId="EBI-1005487">
        <id>P35968</id>
    </interactant>
    <interactant intactId="EBI-621482">
        <id>P12931</id>
        <label>SRC</label>
    </interactant>
    <organismsDiffer>false</organismsDiffer>
    <experiments>6</experiments>
</comment>
<comment type="interaction">
    <interactant intactId="EBI-1005487">
        <id>P35968</id>
    </interactant>
    <interactant intactId="EBI-1026643">
        <id>P15692</id>
        <label>VEGFA</label>
    </interactant>
    <organismsDiffer>false</organismsDiffer>
    <experiments>5</experiments>
</comment>
<comment type="interaction">
    <interactant intactId="EBI-1005487">
        <id>P35968</id>
    </interactant>
    <interactant intactId="EBI-1026691">
        <id>P15692-4</id>
        <label>VEGFA</label>
    </interactant>
    <organismsDiffer>false</organismsDiffer>
    <experiments>8</experiments>
</comment>
<comment type="interaction">
    <interactant intactId="EBI-1005487">
        <id>P35968</id>
    </interactant>
    <interactant intactId="EBI-3405539">
        <id>P49767</id>
        <label>VEGFC</label>
    </interactant>
    <organismsDiffer>false</organismsDiffer>
    <experiments>6</experiments>
</comment>
<comment type="interaction">
    <interactant intactId="EBI-1005487">
        <id>P35968</id>
    </interactant>
    <interactant intactId="EBI-15622828">
        <id>Q9MYV3-3</id>
        <label>VEGFA</label>
    </interactant>
    <organismsDiffer>true</organismsDiffer>
    <experiments>2</experiments>
</comment>
<comment type="subcellular location">
    <subcellularLocation>
        <location evidence="1">Cell junction</location>
    </subcellularLocation>
    <subcellularLocation>
        <location evidence="45">Endoplasmic reticulum</location>
    </subcellularLocation>
    <subcellularLocation>
        <location evidence="48">Cell membrane</location>
    </subcellularLocation>
    <text evidence="1 45">Localized with RAP1A at cell-cell junctions (By similarity). Colocalizes with ERN1 and XBP1 in the endoplasmic reticulum in endothelial cells in a vascular endothelial growth factor (VEGF)-dependent manner (PubMed:23529610).</text>
</comment>
<comment type="subcellular location">
    <molecule>Isoform 1</molecule>
    <subcellularLocation>
        <location>Cell membrane</location>
        <topology>Single-pass type I membrane protein</topology>
    </subcellularLocation>
    <subcellularLocation>
        <location>Cytoplasm</location>
    </subcellularLocation>
    <subcellularLocation>
        <location>Nucleus</location>
    </subcellularLocation>
    <subcellularLocation>
        <location>Cytoplasmic vesicle</location>
    </subcellularLocation>
    <subcellularLocation>
        <location>Early endosome</location>
    </subcellularLocation>
    <text>Detected on caveolae-enriched lipid rafts at the cell surface. Is recycled from the plasma membrane to endosomes and back again. Phosphorylation triggered by VEGFA binding promotes internalization and subsequent degradation. VEGFA binding triggers internalization and translocation to the nucleus.</text>
</comment>
<comment type="subcellular location">
    <molecule>Isoform 2</molecule>
    <subcellularLocation>
        <location evidence="57">Secreted</location>
    </subcellularLocation>
</comment>
<comment type="subcellular location">
    <molecule>Isoform 3</molecule>
    <subcellularLocation>
        <location>Secreted</location>
    </subcellularLocation>
</comment>
<comment type="alternative products">
    <event type="alternative splicing"/>
    <isoform>
        <id>P35968-1</id>
        <name>1</name>
        <name>mbVegfr-2</name>
        <sequence type="displayed"/>
    </isoform>
    <isoform>
        <id>P35968-2</id>
        <name>2</name>
        <name>sVegfr-2</name>
        <sequence type="described" ref="VSP_041988 VSP_041989"/>
    </isoform>
    <isoform>
        <id>P35968-3</id>
        <name>3</name>
        <name>VEGFR2-712</name>
        <sequence type="described" ref="VSP_041990 VSP_041991"/>
    </isoform>
</comment>
<comment type="tissue specificity">
    <text evidence="36">Detected in cornea (at protein level). Widely expressed.</text>
</comment>
<comment type="domain">
    <text evidence="39">The second and third Ig-like C2-type (immunoglobulin-like) domains are sufficient for VEGFC binding.</text>
</comment>
<comment type="PTM">
    <text evidence="39 42 52">N-glycosylated.</text>
</comment>
<comment type="PTM">
    <text evidence="15 26 37">Ubiquitinated. Tyrosine phosphorylation of the receptor promotes its poly-ubiquitination, leading to its degradation via the proteasome or lysosomal proteases.</text>
</comment>
<comment type="PTM">
    <text evidence="8 9 10 13 19 22 33 35 48">Autophosphorylated on tyrosine residues upon ligand binding. Autophosphorylation occurs in trans, i.e. one subunit of the dimeric receptor phosphorylates tyrosine residues on the other subunit. Phosphorylation at Tyr-951 is important for interaction with SH2D2A/TSAD and VEGFA-mediated reorganization of the actin cytoskeleton. Phosphorylation at Tyr-1175 is important for interaction with PLCG1 and SHB. Phosphorylation at Tyr-1214 is important for interaction with NCK1 and FYN. Dephosphorylated by PTPRB. Dephosphorylated by PTPRJ at Tyr-951, Tyr-996, Tyr-1054, Tyr-1059, Tyr-1175 and Tyr-1214.</text>
</comment>
<comment type="PTM">
    <text>The inhibitory disulfide bond between Cys-1024 and Cys-1045 may serve as a specific molecular switch for H(2)S-induced modification that regulates KDR/VEGFR2 function.</text>
</comment>
<comment type="disease" evidence="14 32">
    <disease id="DI-02546">
        <name>Hemangioma, capillary infantile</name>
        <acronym>HCI</acronym>
        <description>A condition characterized by dull red, firm, dome-shaped hemangiomas, sharply demarcated from surrounding skin, usually presenting at birth or occurring within the first two or three months of life. They result from highly proliferative, localized growth of capillary endothelium and generally undergo regression and involution without scarring.</description>
        <dbReference type="MIM" id="602089"/>
    </disease>
    <text>Disease susceptibility is associated with variants affecting the gene represented in this entry.</text>
</comment>
<comment type="disease">
    <text>Plays a major role in tumor angiogenesis. In case of HIV-1 infection, the interaction with extracellular viral Tat protein seems to enhance angiogenesis in Kaposi's sarcoma lesions.</text>
</comment>
<comment type="similarity">
    <text evidence="5">Belongs to the protein kinase superfamily. Tyr protein kinase family. CSF-1/PDGF receptor subfamily.</text>
</comment>
<organism>
    <name type="scientific">Homo sapiens</name>
    <name type="common">Human</name>
    <dbReference type="NCBI Taxonomy" id="9606"/>
    <lineage>
        <taxon>Eukaryota</taxon>
        <taxon>Metazoa</taxon>
        <taxon>Chordata</taxon>
        <taxon>Craniata</taxon>
        <taxon>Vertebrata</taxon>
        <taxon>Euteleostomi</taxon>
        <taxon>Mammalia</taxon>
        <taxon>Eutheria</taxon>
        <taxon>Euarchontoglires</taxon>
        <taxon>Primates</taxon>
        <taxon>Haplorrhini</taxon>
        <taxon>Catarrhini</taxon>
        <taxon>Hominidae</taxon>
        <taxon>Homo</taxon>
    </lineage>
</organism>
<proteinExistence type="evidence at protein level"/>
<protein>
    <recommendedName>
        <fullName evidence="57">Vascular endothelial growth factor receptor 2</fullName>
        <shortName>VEGFR-2</shortName>
        <ecNumber evidence="8 9">2.7.10.1</ecNumber>
    </recommendedName>
    <alternativeName>
        <fullName>Fetal liver kinase 1</fullName>
        <shortName>FLK-1</shortName>
    </alternativeName>
    <alternativeName>
        <fullName>Kinase insert domain receptor</fullName>
        <shortName>KDR</shortName>
    </alternativeName>
    <alternativeName>
        <fullName>Protein-tyrosine kinase receptor flk-1</fullName>
    </alternativeName>
    <cdAntigenName>CD309</cdAntigenName>
</protein>
<gene>
    <name evidence="58" type="primary">KDR</name>
    <name type="synonym">FLK1</name>
    <name type="synonym">VEGFR2</name>
</gene>
<name>VGFR2_HUMAN</name>
<reference key="1">
    <citation type="journal article" date="2008" name="Arthritis Res. Ther.">
        <title>Novel splice variants derived from the receptor tyrosine kinase superfamily are potential therapeutics for rheumatoid arthritis.</title>
        <authorList>
            <person name="Jin P."/>
            <person name="Zhang J."/>
            <person name="Sumariwalla P.F."/>
            <person name="Ni I."/>
            <person name="Jorgensen B."/>
            <person name="Crawford D."/>
            <person name="Phillips S."/>
            <person name="Feldmann M."/>
            <person name="Shepard H.M."/>
            <person name="Paleolog E.M."/>
        </authorList>
    </citation>
    <scope>NUCLEOTIDE SEQUENCE [MRNA] (ISOFORM 3)</scope>
    <scope>INTERACTION WITH VEGFC</scope>
    <scope>SUBCELLULAR LOCATION</scope>
</reference>
<reference key="2">
    <citation type="journal article" date="2009" name="Nat. Med.">
        <title>Alternatively spliced vascular endothelial growth factor receptor-2 is an essential endogenous inhibitor of lymphatic vessel growth.</title>
        <authorList>
            <person name="Albuquerque R.J."/>
            <person name="Hayashi T."/>
            <person name="Cho W.G."/>
            <person name="Kleinman M.E."/>
            <person name="Dridi S."/>
            <person name="Takeda A."/>
            <person name="Baffi J.Z."/>
            <person name="Yamada K."/>
            <person name="Kaneko H."/>
            <person name="Green M.G."/>
            <person name="Chappell J."/>
            <person name="Wilting J."/>
            <person name="Weich H.A."/>
            <person name="Yamagami S."/>
            <person name="Amano S."/>
            <person name="Mizuki N."/>
            <person name="Alexander J.S."/>
            <person name="Peterson M.L."/>
            <person name="Brekken R.A."/>
            <person name="Hirashima M."/>
            <person name="Capoor S."/>
            <person name="Usui T."/>
            <person name="Ambati B.K."/>
            <person name="Ambati J."/>
        </authorList>
    </citation>
    <scope>NUCLEOTIDE SEQUENCE [MRNA] (ISOFORM 2)</scope>
    <scope>FUNCTION IN INHIBITION OF LYMPHANGIOGENESIS</scope>
    <scope>INTERACTION WITH VEGFC</scope>
    <scope>TISSUE SPECIFICITY</scope>
</reference>
<reference key="3">
    <citation type="submission" date="1997-12" db="EMBL/GenBank/DDBJ databases">
        <title>Full length human KDR/flk-1 sequence.</title>
        <authorList>
            <person name="Yin L.Y."/>
            <person name="Wu Y."/>
            <person name="Patterson C."/>
        </authorList>
    </citation>
    <scope>NUCLEOTIDE SEQUENCE [MRNA] (ISOFORM 1)</scope>
</reference>
<reference key="4">
    <citation type="submission" date="1998-05" db="EMBL/GenBank/DDBJ databases">
        <title>Coding region for human VEGF receptor KDR (VEGFR-2).</title>
        <authorList>
            <person name="Yu Y."/>
            <person name="Whitney R.G."/>
            <person name="Sato J.D."/>
        </authorList>
    </citation>
    <scope>NUCLEOTIDE SEQUENCE [MRNA] (ISOFORM 1)</scope>
    <source>
        <tissue>Umbilical vein</tissue>
    </source>
</reference>
<reference key="5">
    <citation type="journal article" date="2005" name="Nature">
        <title>Generation and annotation of the DNA sequences of human chromosomes 2 and 4.</title>
        <authorList>
            <person name="Hillier L.W."/>
            <person name="Graves T.A."/>
            <person name="Fulton R.S."/>
            <person name="Fulton L.A."/>
            <person name="Pepin K.H."/>
            <person name="Minx P."/>
            <person name="Wagner-McPherson C."/>
            <person name="Layman D."/>
            <person name="Wylie K."/>
            <person name="Sekhon M."/>
            <person name="Becker M.C."/>
            <person name="Fewell G.A."/>
            <person name="Delehaunty K.D."/>
            <person name="Miner T.L."/>
            <person name="Nash W.E."/>
            <person name="Kremitzki C."/>
            <person name="Oddy L."/>
            <person name="Du H."/>
            <person name="Sun H."/>
            <person name="Bradshaw-Cordum H."/>
            <person name="Ali J."/>
            <person name="Carter J."/>
            <person name="Cordes M."/>
            <person name="Harris A."/>
            <person name="Isak A."/>
            <person name="van Brunt A."/>
            <person name="Nguyen C."/>
            <person name="Du F."/>
            <person name="Courtney L."/>
            <person name="Kalicki J."/>
            <person name="Ozersky P."/>
            <person name="Abbott S."/>
            <person name="Armstrong J."/>
            <person name="Belter E.A."/>
            <person name="Caruso L."/>
            <person name="Cedroni M."/>
            <person name="Cotton M."/>
            <person name="Davidson T."/>
            <person name="Desai A."/>
            <person name="Elliott G."/>
            <person name="Erb T."/>
            <person name="Fronick C."/>
            <person name="Gaige T."/>
            <person name="Haakenson W."/>
            <person name="Haglund K."/>
            <person name="Holmes A."/>
            <person name="Harkins R."/>
            <person name="Kim K."/>
            <person name="Kruchowski S.S."/>
            <person name="Strong C.M."/>
            <person name="Grewal N."/>
            <person name="Goyea E."/>
            <person name="Hou S."/>
            <person name="Levy A."/>
            <person name="Martinka S."/>
            <person name="Mead K."/>
            <person name="McLellan M.D."/>
            <person name="Meyer R."/>
            <person name="Randall-Maher J."/>
            <person name="Tomlinson C."/>
            <person name="Dauphin-Kohlberg S."/>
            <person name="Kozlowicz-Reilly A."/>
            <person name="Shah N."/>
            <person name="Swearengen-Shahid S."/>
            <person name="Snider J."/>
            <person name="Strong J.T."/>
            <person name="Thompson J."/>
            <person name="Yoakum M."/>
            <person name="Leonard S."/>
            <person name="Pearman C."/>
            <person name="Trani L."/>
            <person name="Radionenko M."/>
            <person name="Waligorski J.E."/>
            <person name="Wang C."/>
            <person name="Rock S.M."/>
            <person name="Tin-Wollam A.-M."/>
            <person name="Maupin R."/>
            <person name="Latreille P."/>
            <person name="Wendl M.C."/>
            <person name="Yang S.-P."/>
            <person name="Pohl C."/>
            <person name="Wallis J.W."/>
            <person name="Spieth J."/>
            <person name="Bieri T.A."/>
            <person name="Berkowicz N."/>
            <person name="Nelson J.O."/>
            <person name="Osborne J."/>
            <person name="Ding L."/>
            <person name="Meyer R."/>
            <person name="Sabo A."/>
            <person name="Shotland Y."/>
            <person name="Sinha P."/>
            <person name="Wohldmann P.E."/>
            <person name="Cook L.L."/>
            <person name="Hickenbotham M.T."/>
            <person name="Eldred J."/>
            <person name="Williams D."/>
            <person name="Jones T.A."/>
            <person name="She X."/>
            <person name="Ciccarelli F.D."/>
            <person name="Izaurralde E."/>
            <person name="Taylor J."/>
            <person name="Schmutz J."/>
            <person name="Myers R.M."/>
            <person name="Cox D.R."/>
            <person name="Huang X."/>
            <person name="McPherson J.D."/>
            <person name="Mardis E.R."/>
            <person name="Clifton S.W."/>
            <person name="Warren W.C."/>
            <person name="Chinwalla A.T."/>
            <person name="Eddy S.R."/>
            <person name="Marra M.A."/>
            <person name="Ovcharenko I."/>
            <person name="Furey T.S."/>
            <person name="Miller W."/>
            <person name="Eichler E.E."/>
            <person name="Bork P."/>
            <person name="Suyama M."/>
            <person name="Torrents D."/>
            <person name="Waterston R.H."/>
            <person name="Wilson R.K."/>
        </authorList>
    </citation>
    <scope>NUCLEOTIDE SEQUENCE [LARGE SCALE GENOMIC DNA]</scope>
</reference>
<reference key="6">
    <citation type="journal article" date="2004" name="Genome Res.">
        <title>The status, quality, and expansion of the NIH full-length cDNA project: the Mammalian Gene Collection (MGC).</title>
        <authorList>
            <consortium name="The MGC Project Team"/>
        </authorList>
    </citation>
    <scope>NUCLEOTIDE SEQUENCE [LARGE SCALE MRNA] (ISOFORM 1)</scope>
    <scope>VARIANT HIS-472</scope>
</reference>
<reference key="7">
    <citation type="journal article" date="1991" name="Oncogene">
        <title>Identification of a new endothelial cell growth factor receptor tyrosine kinase.</title>
        <authorList>
            <person name="Terman B.I."/>
            <person name="Carrion M.E."/>
            <person name="Kovacs E."/>
            <person name="Rasmussen B.A."/>
            <person name="Eddy R.L."/>
            <person name="Shows T.B."/>
        </authorList>
    </citation>
    <scope>NUCLEOTIDE SEQUENCE [MRNA] OF 3-1356 (ISOFORM 1)</scope>
    <scope>VARIANT GLU-848</scope>
    <source>
        <tissue>Umbilical vein</tissue>
    </source>
</reference>
<reference key="8">
    <citation type="journal article" date="1995" name="J. Biol. Chem.">
        <title>Cloning and functional analysis of the promoter for KDR/flk-1, a receptor for vascular endothelial growth factor.</title>
        <authorList>
            <person name="Patterson C."/>
            <person name="Perrella M.A."/>
            <person name="Hsieh C.-M."/>
            <person name="Yoshizumi M."/>
            <person name="Lee M.-E."/>
            <person name="Harber E."/>
        </authorList>
    </citation>
    <scope>NUCLEOTIDE SEQUENCE [GENOMIC DNA] OF 1-22</scope>
</reference>
<reference key="9">
    <citation type="journal article" date="1992" name="Biochem. Biophys. Res. Commun.">
        <title>Identification of the KDR tyrosine kinase as a receptor for vascular endothelial cell growth factor.</title>
        <authorList>
            <person name="Terman B.I."/>
            <person name="Dougher-Vermazen M."/>
            <person name="Carrion M.E."/>
            <person name="Dimitrov D."/>
            <person name="Armellino D.C."/>
            <person name="Gospodarowicz D."/>
            <person name="Boehlen P."/>
        </authorList>
    </citation>
    <scope>FUNCTION</scope>
    <scope>SUBCELLULAR LOCATION</scope>
    <scope>INTERACTION WITH VEGFA</scope>
</reference>
<reference key="10">
    <citation type="journal article" date="1994" name="J. Biol. Chem.">
        <title>Different signal transduction properties of KDR and Flt1, two receptors for vascular endothelial growth factor.</title>
        <authorList>
            <person name="Waltenberger J."/>
            <person name="Claesson-Welsh L."/>
            <person name="Siegbahn A."/>
            <person name="Shibuya M."/>
            <person name="Heldin C.H."/>
        </authorList>
    </citation>
    <scope>FUNCTION AS VEGFA RECEPTOR; IN REGULATION OF CELL SHAPE; ACTIN CYTOSKELETON REORGANIZATION; CELL MIGRATION AND CELL PROLIFERATION</scope>
    <scope>AUTOPHOSPHORYLATION</scope>
</reference>
<reference key="11">
    <citation type="journal article" date="1997" name="Oncogene">
        <title>The 230 kDa mature form of KDR/Flk-1 (VEGF receptor-2) activates the PLC-gamma pathway and partially induces mitotic signals in NIH3T3 fibroblasts.</title>
        <authorList>
            <person name="Takahashi T."/>
            <person name="Shibuya M."/>
        </authorList>
    </citation>
    <scope>FUNCTION IN VEGFA SIGNALING; PHOSPHORYLATION OF PLCG1; ACTIVATION OF MAP KINASES AND IN PROMOTING PROLIFERATION OF ENDOTHELIAL CELLS</scope>
    <scope>INTERACTION WITH VEGFA AND PLCG1</scope>
    <scope>AUTOPHOSPHORYLATION</scope>
    <scope>SUBCELLULAR LOCATION</scope>
    <scope>GLYCOSYLATION</scope>
</reference>
<reference key="12">
    <citation type="journal article" date="1998" name="Biochem. Biophys. Res. Commun.">
        <title>VEGF-A induces expression of eNOS and iNOS in endothelial cells via VEGF receptor-2 (KDR).</title>
        <authorList>
            <person name="Kroll J."/>
            <person name="Waltenberger J."/>
        </authorList>
    </citation>
    <scope>FUNCTION IN INDUCTION OF NOS2 AND NOS3</scope>
</reference>
<reference key="13">
    <citation type="journal article" date="1998" name="J. Biol. Chem.">
        <title>Vascular endothelial growth factor regulates endothelial cell survival through the phosphatidylinositol 3'-kinase/Akt signal transduction pathway. Requirement for Flk-1/KDR activation.</title>
        <authorList>
            <person name="Gerber H.P."/>
            <person name="McMurtrey A."/>
            <person name="Kowalski J."/>
            <person name="Yan M."/>
            <person name="Keyt B.A."/>
            <person name="Dixit V."/>
            <person name="Ferrara N."/>
        </authorList>
    </citation>
    <scope>FUNCTION IN ACTIVATION OF THE PHOSPHATIDYLINOSITOL 3-KINASE AND AKT1 SIGNALING PATHWAY</scope>
</reference>
<reference key="14">
    <citation type="journal article" date="1999" name="Biochem. Biophys. Res. Commun.">
        <title>A novel function of VEGF receptor-2 (KDR): rapid release of nitric oxide in response to VEGF-A stimulation in endothelial cells.</title>
        <authorList>
            <person name="Kroll J."/>
            <person name="Waltenberger J."/>
        </authorList>
    </citation>
    <scope>FUNCTION IN NITRIC OXIDE RELEASE</scope>
</reference>
<reference key="15">
    <citation type="journal article" date="1999" name="J. Biol. Chem.">
        <title>Vascular endothelial growth factor receptor KDR tyrosine kinase activity is increased by autophosphorylation of two activation loop tyrosine residues.</title>
        <authorList>
            <person name="Kendall R.L."/>
            <person name="Rutledge R.Z."/>
            <person name="Mao X."/>
            <person name="Tebben A.J."/>
            <person name="Hungate R.W."/>
            <person name="Thomas K.A."/>
        </authorList>
    </citation>
    <scope>CATALYTIC ACTIVITY</scope>
    <scope>CHARACTERIZATION OF VARIANT GLU-848</scope>
    <scope>PHOSPHORYLATION AT TYR-1054 AND TYR-1059</scope>
    <scope>ACTIVITY REGULATION</scope>
</reference>
<reference key="16">
    <citation type="journal article" date="1999" name="Oncogene">
        <title>Autophosphorylation of KDR in the kinase domain is required for maximal VEGF-stimulated kinase activity and receptor internalization.</title>
        <authorList>
            <person name="Dougher M."/>
            <person name="Terman B.I."/>
        </authorList>
    </citation>
    <scope>FUNCTION IN PHOSPHORYLATION OF PLCG1 AND PTK2/FAK1</scope>
    <scope>INTERACTION WITH VEGFA</scope>
    <scope>CATALYTIC ACTIVITY</scope>
    <scope>PHOSPHORYLATION AT TYR-996; TYR-1054 AND TYR-1059</scope>
    <scope>MUTAGENESIS OF TYR-996; TYR-1054 AND TYR-1059</scope>
    <scope>SUBCELLULAR LOCATION</scope>
    <scope>ACTIVITY REGULATION</scope>
</reference>
<reference key="17">
    <citation type="journal article" date="2000" name="J. Virol.">
        <title>Identification of specific molecular structures of human immunodeficiency virus type 1 Tat relevant for its biological effects on vascular endothelial cells.</title>
        <authorList>
            <person name="Mitola S."/>
            <person name="Soldi R."/>
            <person name="Zanon I."/>
            <person name="Barra L."/>
            <person name="Gutierrez M.I."/>
            <person name="Berkhout B."/>
            <person name="Giacca M."/>
            <person name="Bussolino F."/>
        </authorList>
    </citation>
    <scope>INTERACTION WITH HIV-1 TAT (MICROBIAL INFECTION)</scope>
</reference>
<reference key="18">
    <citation type="journal article" date="2001" name="EMBO J.">
        <title>A single autophosphorylation site on KDR/Flk-1 is essential for VEGF-A-dependent activation of PLC-gamma and DNA synthesis in vascular endothelial cells.</title>
        <authorList>
            <person name="Takahashi T."/>
            <person name="Yamaguchi S."/>
            <person name="Chida K."/>
            <person name="Shibuya M."/>
        </authorList>
    </citation>
    <scope>FUNCTION IN ENDOTHELIAL CELL PROLIFERATION; PHOSPHORYLATION OF PLCG1 AND ACTIVATION OF MAP KINASES</scope>
    <scope>PHOSPHORYLATION AT TYR-1175 AND TYR-1214</scope>
    <scope>MUTAGENESIS OF LYS-868 AND TYR-1175</scope>
</reference>
<reference key="19">
    <citation type="journal article" date="2003" name="J. Biol. Chem.">
        <title>Vascular endothelial growth factor-dependent down-regulation of Flk-1/KDR involves Cbl-mediated ubiquitination. Consequences on nitric oxide production from endothelial cells.</title>
        <authorList>
            <person name="Duval M."/>
            <person name="Bedard-Goulet S."/>
            <person name="Delisle C."/>
            <person name="Gratton J.P."/>
        </authorList>
    </citation>
    <scope>UBIQUITINATION</scope>
    <scope>FUNCTION IN NITRIC OXIDE PRODUCTION</scope>
    <scope>SUBCELLULAR LOCATION</scope>
    <scope>INTERACTION WITH CBL</scope>
</reference>
<reference key="20">
    <citation type="journal article" date="2003" name="J. Biol. Chem.">
        <title>Ligand-induced vascular endothelial growth factor receptor-3 (VEGFR-3) heterodimerization with VEGFR-2 in primary lymphatic endothelial cells regulates tyrosine phosphorylation sites.</title>
        <authorList>
            <person name="Dixelius J."/>
            <person name="Makinen T."/>
            <person name="Wirzenius M."/>
            <person name="Karkkainen M.J."/>
            <person name="Wernstedt C."/>
            <person name="Alitalo K."/>
            <person name="Claesson-Welsh L."/>
        </authorList>
    </citation>
    <scope>INTERACTION WITH FLT4</scope>
</reference>
<reference key="21">
    <citation type="journal article" date="2004" name="J. Biol. Chem.">
        <title>The adaptor protein shb binds to tyrosine 1175 in vascular endothelial growth factor (VEGF) receptor-2 and regulates VEGF-dependent cellular migration.</title>
        <authorList>
            <person name="Holmqvist K."/>
            <person name="Cross M.J."/>
            <person name="Rolny C."/>
            <person name="Haegerkvist R."/>
            <person name="Rahimi N."/>
            <person name="Matsumoto T."/>
            <person name="Claesson-Welsh L."/>
            <person name="Welsh M."/>
        </authorList>
    </citation>
    <scope>INTERACTION WITH SHB</scope>
    <scope>FUNCTION IN CELL MIGRATION</scope>
</reference>
<reference key="22">
    <citation type="journal article" date="2004" name="J. Pathol.">
        <title>Phosphorylated KDR is expressed in the neoplastic and stromal elements of human renal tumours and shuttles from cell membrane to nucleus.</title>
        <authorList>
            <person name="Fox S.B."/>
            <person name="Turley H."/>
            <person name="Cheale M."/>
            <person name="Blazquez C."/>
            <person name="Roberts H."/>
            <person name="James N."/>
            <person name="Cook N."/>
            <person name="Harris A."/>
            <person name="Gatter K."/>
        </authorList>
    </citation>
    <scope>SUBCELLULAR LOCATION</scope>
    <scope>PHOSPHORYLATION</scope>
</reference>
<reference key="23">
    <citation type="journal article" date="2004" name="J. Biol. Chem.">
        <title>Vascular endothelial growth factor (VEGF)-D and VEGF-A differentially regulate KDR-mediated signaling and biological function in vascular endothelial cells.</title>
        <authorList>
            <person name="Jia H."/>
            <person name="Bagherzadeh A."/>
            <person name="Bicknell R."/>
            <person name="Duchen M.R."/>
            <person name="Liu D."/>
            <person name="Zachary I."/>
        </authorList>
    </citation>
    <scope>INTERACTION WITH VEGFA AND VEGFD</scope>
    <scope>PHOSPHORYLATION AT TYR-1054 AND TYR-1059</scope>
    <scope>FUNCTION IN VEGFA AND VEGFD SIGNALING; ACTIVATION OF MAPK1/ERK2 AND MAPK3/ERK1; ACTIVATION OF AKT1; PHOSPHORYLATION OF PLCG1 AND NOS3; MODULATION OF INTRACELLULAR CA(2+) LEVELS; CELL SURVIVAL AND POSITIVE REGULATION OF CELL PROLIFERATION; CELL MIGRATION AND ANGIOGENESIS</scope>
    <scope>ACTIVITY REGULATION</scope>
</reference>
<reference key="24">
    <citation type="journal article" date="2005" name="EMBO J.">
        <title>VEGF receptor-2 Y951 signaling and a role for the adapter molecule TSAd in tumor angiogenesis.</title>
        <authorList>
            <person name="Matsumoto T."/>
            <person name="Bohman S."/>
            <person name="Dixelius J."/>
            <person name="Berge T."/>
            <person name="Dimberg A."/>
            <person name="Magnusson P."/>
            <person name="Wang L."/>
            <person name="Wikner C."/>
            <person name="Qi J.H."/>
            <person name="Wernstedt C."/>
            <person name="Wu J."/>
            <person name="Bruheim S."/>
            <person name="Mugishima H."/>
            <person name="Mukhopadhyay D."/>
            <person name="Spurkland A."/>
            <person name="Claesson-Welsh L."/>
        </authorList>
    </citation>
    <scope>FUNCTION IN CELL MIGRATION; PHOSPHORYLATION OF PLCG1; ACTIVATION OF MAPK1/ERK2; MAPK3/ERK1 AND THE MAP KINASES AND IN REGULATION OF ACTIN CYTOSKELETON REORGANIZATION</scope>
    <scope>INTERACTION WITH SH2D2A/TSAD</scope>
    <scope>PHOSPHORYLATION AT TYR-951; TYR-1054; TYR-1059; TYR-1214; TYR-1305; TYR-1309 AND TYR-1319</scope>
    <scope>MUTAGENESIS OF TYR-951</scope>
</reference>
<reference key="25">
    <citation type="journal article" date="2006" name="J. Biol. Chem.">
        <title>Phosphorylation of Tyr1214 within VEGFR-2 triggers the recruitment of Nck and activation of Fyn leading to SAPK2/p38 activation and endothelial cell migration in response to VEGF.</title>
        <authorList>
            <person name="Lamalice L."/>
            <person name="Houle F."/>
            <person name="Huot J."/>
        </authorList>
    </citation>
    <scope>FUNCTION IN ENDOTHELIAL CELL MIGRATION; ACTIVATION OF MAP KINASES AND IN PHOSPHORYLATION OF FYN; SRC AND NCK1</scope>
    <scope>INTERACTION WITH GRB2; FYN AND NCK1</scope>
    <scope>MUTAGENESIS OF TYR-1214</scope>
</reference>
<reference key="26">
    <citation type="journal article" date="2006" name="Traffic">
        <title>Intrinsic tyrosine kinase activity is required for vascular endothelial growth factor receptor 2 ubiquitination, sorting and degradation in endothelial cells.</title>
        <authorList>
            <person name="Ewan L.C."/>
            <person name="Jopling H.M."/>
            <person name="Jia H."/>
            <person name="Mittar S."/>
            <person name="Bagherzadeh A."/>
            <person name="Howell G.J."/>
            <person name="Walker J.H."/>
            <person name="Zachary I.C."/>
            <person name="Ponnambalam S."/>
        </authorList>
    </citation>
    <scope>SUBCELLULAR LOCATION</scope>
    <scope>UBIQUITINATION</scope>
    <scope>DEGRADATION</scope>
</reference>
<reference key="27">
    <citation type="journal article" date="2007" name="J. Biol. Chem.">
        <title>Phosphorylation of tyrosine 801 of vascular endothelial growth factor receptor-2 is necessary for Akt-dependent endothelial nitric-oxide synthase activation and nitric oxide release from endothelial cells.</title>
        <authorList>
            <person name="Blanes M.G."/>
            <person name="Oubaha M."/>
            <person name="Rautureau Y."/>
            <person name="Gratton J.P."/>
        </authorList>
    </citation>
    <scope>FUNCTION IN ACTIVATION OF AKT1; PHOSPHORYLATION OF PLCG1 AND NOS3 AND REGULATION OF NITRIC OXIDE PRODUCTION</scope>
    <scope>PHOSPHORYLATION AT TYR-801</scope>
    <scope>MUTAGENESIS OF TYR-801</scope>
</reference>
<reference key="28">
    <citation type="journal article" date="2008" name="J. Clin. Invest.">
        <title>AIP1 functions as an endogenous inhibitor of VEGFR2-mediated signaling and inflammatory angiogenesis in mice.</title>
        <authorList>
            <person name="Zhang H."/>
            <person name="He Y."/>
            <person name="Dai S."/>
            <person name="Xu Z."/>
            <person name="Luo Y."/>
            <person name="Wan T."/>
            <person name="Luo D."/>
            <person name="Jones D."/>
            <person name="Tang S."/>
            <person name="Chen H."/>
            <person name="Sessa W.C."/>
            <person name="Min W."/>
        </authorList>
    </citation>
    <scope>INTERACTION WITH DAB2IP</scope>
</reference>
<reference key="29">
    <citation type="journal article" date="2009" name="FASEB J.">
        <title>Transcriptional profiling reveals a critical role for tyrosine phosphatase VE-PTP in regulation of VEGFR2 activity and endothelial cell morphogenesis.</title>
        <authorList>
            <person name="Mellberg S."/>
            <person name="Dimberg A."/>
            <person name="Bahram F."/>
            <person name="Hayashi M."/>
            <person name="Rennel E."/>
            <person name="Ameur A."/>
            <person name="Westholm J.O."/>
            <person name="Larsson E."/>
            <person name="Lindahl P."/>
            <person name="Cross M.J."/>
            <person name="Claesson-Welsh L."/>
        </authorList>
    </citation>
    <scope>PHOSPHORYLATION AT TYR-951; TYR-1175 AND TYR-1214</scope>
    <scope>DEPHOSPHORYLATION BY PTPRB</scope>
</reference>
<reference key="30">
    <citation type="journal article" date="2009" name="Mol. Cell. Biol.">
        <title>New role for the protein tyrosine phosphatase DEP-1 in Akt activation and endothelial cell survival.</title>
        <authorList>
            <person name="Chabot C."/>
            <person name="Spring K."/>
            <person name="Gratton J.P."/>
            <person name="Elchebly M."/>
            <person name="Royal I."/>
        </authorList>
    </citation>
    <scope>PHOSPHORYLATION AT TYR-801; TYR-951; TYR-996; TYR-1054; TYR-1059; TYR-1175 AND TYR-1214; DEPHOSPHORYLATION AT TYR-951; TYR-996; TYR-1054; TYR-1059; TYR-1175 AND TYR-1214 BY PTPRJ</scope>
</reference>
<reference key="31">
    <citation type="journal article" date="2010" name="Cell Death Differ.">
        <title>VEGF-dependent tumor angiogenesis requires inverse and reciprocal regulation of VEGFR1 and VEGFR2.</title>
        <authorList>
            <person name="Zhang Z."/>
            <person name="Neiva K.G."/>
            <person name="Lingen M.W."/>
            <person name="Ellis L.M."/>
            <person name="Nor J.E."/>
        </authorList>
    </citation>
    <scope>FUNCTION AS VEGFA RECEPTOR IN TUMOR ANGIOGENESIS</scope>
    <scope>SUBCELLULAR LOCATION</scope>
    <scope>UBIQUITINATION</scope>
</reference>
<reference key="32">
    <citation type="journal article" date="2010" name="Clin. Cancer Res.">
        <title>Neuroblastoma progression correlates with downregulation of the lymphangiogenesis inhibitor sVEGFR-2.</title>
        <authorList>
            <person name="Becker J."/>
            <person name="Pavlakovic H."/>
            <person name="Ludewig F."/>
            <person name="Wilting F."/>
            <person name="Weich H.A."/>
            <person name="Albuquerque R."/>
            <person name="Ambati J."/>
            <person name="Wilting J."/>
        </authorList>
    </citation>
    <scope>FUNCTION IN LYMPHANGIOGENESIS (ISOFORM 2)</scope>
</reference>
<reference key="33">
    <citation type="journal article" date="2010" name="EMBO J.">
        <title>VEGF receptor 2/-3 heterodimers detected in situ by proximity ligation on angiogenic sprouts.</title>
        <authorList>
            <person name="Nilsson I."/>
            <person name="Bahram F."/>
            <person name="Li X."/>
            <person name="Gualandi L."/>
            <person name="Koch S."/>
            <person name="Jarvius M."/>
            <person name="Soderberg O."/>
            <person name="Anisimov A."/>
            <person name="Kholova I."/>
            <person name="Pytowski B."/>
            <person name="Baldwin M."/>
            <person name="Yla-Herttuala S."/>
            <person name="Alitalo K."/>
            <person name="Kreuger J."/>
            <person name="Claesson-Welsh L."/>
        </authorList>
    </citation>
    <scope>INTERACTION WITH VEGFC AND FLT4</scope>
    <scope>SUBCELLULAR LOCATION</scope>
    <scope>FUNCTION IN ANGIOGENESIS</scope>
</reference>
<reference key="34">
    <citation type="journal article" date="2011" name="Biochem. Biophys. Res. Commun.">
        <title>The VEGFR2 receptor tyrosine kinase undergoes constitutive endosome-to-plasma membrane recycling.</title>
        <authorList>
            <person name="Jopling H.M."/>
            <person name="Howell G.J."/>
            <person name="Gamper N."/>
            <person name="Ponnambalam S."/>
        </authorList>
    </citation>
    <scope>SUBCELLULAR LOCATION</scope>
</reference>
<reference key="35">
    <citation type="journal article" date="2011" name="Blood">
        <title>Blood vessel endothelial VEGFR-2 delays lymphangiogenesis: an endogenous trapping mechanism links lymph- and angiogenesis.</title>
        <authorList>
            <person name="Nakao S."/>
            <person name="Zandi S."/>
            <person name="Hata Y."/>
            <person name="Kawahara S."/>
            <person name="Arita R."/>
            <person name="Schering A."/>
            <person name="Sun D."/>
            <person name="Melhorn M.I."/>
            <person name="Ito Y."/>
            <person name="Lara-Castillo N."/>
            <person name="Ishibashi T."/>
            <person name="Hafezi-Moghadam A."/>
        </authorList>
    </citation>
    <scope>FUNCTION IN LYMPHANGIOGENESIS</scope>
    <scope>INTERACTION WITH FLT4 AND VEGFC</scope>
</reference>
<reference key="36">
    <citation type="journal article" date="2006" name="J. Biochem. Mol. Biol.">
        <title>Differential roles of vascular endothelial growth factor receptor-1 and receptor-2 in angiogenesis.</title>
        <authorList>
            <person name="Shibuya M."/>
        </authorList>
    </citation>
    <scope>REVIEW ON ROLE IN ANGIOGENESIS</scope>
</reference>
<reference key="37">
    <citation type="journal article" date="2007" name="Cell. Signal.">
        <title>Vascular endothelial growth factor receptor-2: structure, function, intracellular signalling and therapeutic inhibition.</title>
        <authorList>
            <person name="Holmes K."/>
            <person name="Roberts O.L."/>
            <person name="Thomas A.M."/>
            <person name="Cross M.J."/>
        </authorList>
    </citation>
    <scope>REVIEW</scope>
</reference>
<reference key="38">
    <citation type="journal article" date="2008" name="Biochem. Biophys. Res. Commun.">
        <title>VEGF receptor protein-tyrosine kinases: structure and regulation.</title>
        <authorList>
            <person name="Roskoski R. Jr."/>
        </authorList>
    </citation>
    <scope>REVIEW ON STRUCTURE AND FUNCTION</scope>
</reference>
<reference key="39">
    <citation type="journal article" date="2009" name="Curr. Opin. Cell Biol.">
        <title>VEGFs and receptors involved in angiogenesis versus lymphangiogenesis.</title>
        <authorList>
            <person name="Lohela M."/>
            <person name="Bry M."/>
            <person name="Tammela T."/>
            <person name="Alitalo K."/>
        </authorList>
    </citation>
    <scope>REVIEW ON ROLE IN ANGIOGENESIS AND CANCER</scope>
</reference>
<reference key="40">
    <citation type="journal article" date="2010" name="Biochim. Biophys. Acta">
        <title>Structure-function analysis of VEGF receptor activation and the role of coreceptors in angiogenic signaling.</title>
        <authorList>
            <person name="Grunewald F.S."/>
            <person name="Prota A.E."/>
            <person name="Giese A."/>
            <person name="Ballmer-Hofer K."/>
        </authorList>
    </citation>
    <scope>REVIEW ON LIGAND SPECIFICITY; FUNCTION; STRUCTURE; PHOSPHORYLATION AND SIGNALING</scope>
</reference>
<reference key="41">
    <citation type="journal article" date="2010" name="Biochim. Biophys. Acta">
        <title>Vascular endothelial growth factor receptor-2 in breast cancer.</title>
        <authorList>
            <person name="Guo S."/>
            <person name="Colbert L.S."/>
            <person name="Fuller M."/>
            <person name="Zhang Y."/>
            <person name="Gonzalez-Perez R.R."/>
        </authorList>
    </citation>
    <scope>REVIEW ON ROLE IN ANGIOGENESIS AND CANCER</scope>
</reference>
<reference key="42">
    <citation type="journal article" date="2010" name="Genes Cancer">
        <title>Tyrosine kinase receptor Flt/VEGFR family: its characterization related to angiogenesis and cancer.</title>
        <authorList>
            <person name="Shibuya M."/>
        </authorList>
    </citation>
    <scope>REVIEW ON ROLE IN ANGIOGENESIS AND CANCER</scope>
</reference>
<reference key="43">
    <citation type="journal article" date="2011" name="Biochem. J.">
        <title>Signal transduction by vascular endothelial growth factor receptors.</title>
        <authorList>
            <person name="Koch S."/>
            <person name="Tugues S."/>
            <person name="Li X."/>
            <person name="Gualandi L."/>
            <person name="Claesson-Welsh L."/>
        </authorList>
    </citation>
    <scope>REVIEW ON LIGAND SPECIFICITY; FUNCTION; STRUCTURE; PHOSPHORYLATION AND SIGNALING</scope>
</reference>
<reference key="44">
    <citation type="journal article" date="2011" name="Sci. Signal.">
        <title>System-wide temporal characterization of the proteome and phosphoproteome of human embryonic stem cell differentiation.</title>
        <authorList>
            <person name="Rigbolt K.T."/>
            <person name="Prokhorova T.A."/>
            <person name="Akimov V."/>
            <person name="Henningsen J."/>
            <person name="Johansen P.T."/>
            <person name="Kratchmarova I."/>
            <person name="Kassem M."/>
            <person name="Mann M."/>
            <person name="Olsen J.V."/>
            <person name="Blagoev B."/>
        </authorList>
    </citation>
    <scope>PHOSPHORYLATION [LARGE SCALE ANALYSIS] AT SER-982 AND SER-984</scope>
    <scope>IDENTIFICATION BY MASS SPECTROMETRY [LARGE SCALE ANALYSIS]</scope>
</reference>
<reference key="45">
    <citation type="journal article" date="2012" name="Cell. Signal.">
        <title>Programmed cell death 6 (PDCD6) inhibits angiogenesis through PI3K/mTOR/p70S6K pathway by interacting of VEGFR-2.</title>
        <authorList>
            <person name="Rho S.B."/>
            <person name="Song Y.J."/>
            <person name="Lim M.C."/>
            <person name="Lee S.H."/>
            <person name="Kim B.R."/>
            <person name="Park S.Y."/>
        </authorList>
    </citation>
    <scope>FUNCTION</scope>
    <scope>INTERACTION WITH PDCD6</scope>
</reference>
<reference key="46">
    <citation type="journal article" date="2013" name="Antioxid. Redox Signal.">
        <title>VEGFR2 functions as an H(2)S-targeting receptor protein kinase with its novel Cys1045-Cys1024 disulfide bond serving as a specific molecular switch for hydrogen sulfide actions in vascular endothelial cells.</title>
        <authorList>
            <person name="Tao B.B."/>
            <person name="Liu S.Y."/>
            <person name="Zhang C.C."/>
            <person name="Fu W."/>
            <person name="Cai W.J."/>
            <person name="Wang Y."/>
            <person name="Shen Q."/>
            <person name="Wang M.J."/>
            <person name="Chen Y."/>
            <person name="Zhang L.J."/>
            <person name="Zhu Y.Z."/>
            <person name="Zhu Y.C."/>
        </authorList>
    </citation>
    <scope>ACTIVITY REGULATION</scope>
    <scope>REDOX-ACTIVE DISULFIDE BOND</scope>
    <scope>MUTAGENESIS OF CYS-1045</scope>
</reference>
<reference key="47">
    <citation type="journal article" date="2013" name="Circulation">
        <title>Vascular endothelial cell growth-activated XBP1 splicing in endothelial cells is crucial for angiogenesis.</title>
        <authorList>
            <person name="Zeng L."/>
            <person name="Xiao Q."/>
            <person name="Chen M."/>
            <person name="Margariti A."/>
            <person name="Martin D."/>
            <person name="Ivetic A."/>
            <person name="Xu H."/>
            <person name="Mason J."/>
            <person name="Wang W."/>
            <person name="Cockerill G."/>
            <person name="Mori K."/>
            <person name="Li J.Y."/>
            <person name="Chien S."/>
            <person name="Hu Y."/>
            <person name="Xu Q."/>
        </authorList>
    </citation>
    <scope>INTERACTION WITH ERN1</scope>
    <scope>SUBCELLULAR LOCATION</scope>
</reference>
<reference key="48">
    <citation type="journal article" date="2013" name="J. Biol. Chem.">
        <title>Identification of PDCL3 as a novel chaperone protein involved in the generation of functional VEGF receptor 2.</title>
        <authorList>
            <person name="Srinivasan S."/>
            <person name="Meyer R.D."/>
            <person name="Lugo R."/>
            <person name="Rahimi N."/>
        </authorList>
    </citation>
    <scope>INTERACTION WITH PDCL3</scope>
</reference>
<reference key="49">
    <citation type="journal article" date="2014" name="Mol. Biol. Cell">
        <title>Structural basis for activation of trimeric Gi proteins by multiple growth factor receptors via GIV/Girdin.</title>
        <authorList>
            <person name="Lin C."/>
            <person name="Ear J."/>
            <person name="Midde K."/>
            <person name="Lopez-Sanchez I."/>
            <person name="Aznar N."/>
            <person name="Garcia-Marcos M."/>
            <person name="Kufareva I."/>
            <person name="Abagyan R."/>
            <person name="Ghosh P."/>
        </authorList>
    </citation>
    <scope>INTERACTION WITH CCDC88A</scope>
</reference>
<reference key="50">
    <citation type="journal article" date="2015" name="Angiogenesis">
        <title>Hypoxia-induced expression of phosducin-like 3 regulates expression of VEGFR-2 and promotes angiogenesis.</title>
        <authorList>
            <person name="Srinivasan S."/>
            <person name="Chitalia V."/>
            <person name="Meyer R.D."/>
            <person name="Hartsough E."/>
            <person name="Mehta M."/>
            <person name="Harrold I."/>
            <person name="Anderson N."/>
            <person name="Feng H."/>
            <person name="Smith L.E."/>
            <person name="Jiang Y."/>
            <person name="Costello C.E."/>
            <person name="Rahimi N."/>
        </authorList>
    </citation>
    <scope>INTERACTION WITH PDCL3</scope>
</reference>
<reference key="51">
    <citation type="journal article" date="2015" name="Oncotarget">
        <title>EMMPRIN/CD147 is a novel coreceptor of VEGFR-2 mediating its activation by VEGF.</title>
        <authorList>
            <person name="Khayati F."/>
            <person name="Perez-Cano L."/>
            <person name="Maouche K."/>
            <person name="Sadoux A."/>
            <person name="Boutalbi Z."/>
            <person name="Podgorniak M.P."/>
            <person name="Maskos U."/>
            <person name="Setterblad N."/>
            <person name="Janin A."/>
            <person name="Calvo F."/>
            <person name="Lebbe C."/>
            <person name="Menashi S."/>
            <person name="Fernandez-Recio J."/>
            <person name="Mourah S."/>
        </authorList>
    </citation>
    <scope>FUNCTION</scope>
    <scope>INTERACTION WITH BSG</scope>
    <scope>SUBCELLULAR LOCATION</scope>
    <scope>SUBUNIT</scope>
    <scope>PHOSPHORYLATION</scope>
</reference>
<reference key="52">
    <citation type="journal article" date="2022" name="Nat. Cell Biol.">
        <title>Cysteine oxidation of copper transporter CTR1 drives VEGFR2 signalling and angiogenesis.</title>
        <authorList>
            <person name="Das A."/>
            <person name="Ash D."/>
            <person name="Fouda A.Y."/>
            <person name="Sudhahar V."/>
            <person name="Kim Y.M."/>
            <person name="Hou Y."/>
            <person name="Hudson F.Z."/>
            <person name="Stansfield B.K."/>
            <person name="Caldwell R.B."/>
            <person name="McMenamin M."/>
            <person name="Littlejohn R."/>
            <person name="Su H."/>
            <person name="Regan M.R."/>
            <person name="Merrill B.J."/>
            <person name="Poole L.B."/>
            <person name="Kaplan J.H."/>
            <person name="Fukai T."/>
            <person name="Ushio-Fukai M."/>
        </authorList>
    </citation>
    <scope>INTERACTION WITH SLC31A1</scope>
    <scope>DISULFIDE BOND</scope>
</reference>
<reference key="53">
    <citation type="journal article" date="1999" name="Structure">
        <title>Crystal structure of the kinase domain of human vascular endothelial growth factor receptor 2: a key enzyme in angiogenesis.</title>
        <authorList>
            <person name="McTigue M.A."/>
            <person name="Wickersham J.A."/>
            <person name="Pinko C."/>
            <person name="Showalter R.E."/>
            <person name="Parast C.V."/>
            <person name="Tempczyk-Russell A."/>
            <person name="Gehring M.R."/>
            <person name="Mroczkowski B."/>
            <person name="Kan C.-C."/>
            <person name="Villafranca J.E."/>
            <person name="Appelt K."/>
        </authorList>
    </citation>
    <scope>X-RAY CRYSTALLOGRAPHY (2.4 ANGSTROMS) OF 806-1171</scope>
    <scope>FUNCTION</scope>
    <scope>PHOSPHORYLATION AT TYR-1059</scope>
    <scope>IDENTIFICATION BY MASS SPECTROMETRY</scope>
</reference>
<reference key="54">
    <citation type="journal article" date="2005" name="Bioorg. Med. Chem. Lett.">
        <title>Novel 4-amino-furo[2,3-d]pyrimidines as Tie-2 and VEGFR2 dual inhibitors.</title>
        <authorList>
            <person name="Miyazaki Y."/>
            <person name="Matsunaga S."/>
            <person name="Tang J."/>
            <person name="Maeda Y."/>
            <person name="Nakano M."/>
            <person name="Philippe R.J."/>
            <person name="Shibahara M."/>
            <person name="Liu W."/>
            <person name="Sato H."/>
            <person name="Wang L."/>
            <person name="Nolte R.T."/>
        </authorList>
    </citation>
    <scope>X-RAY CRYSTALLOGRAPHY (1.71 ANGSTROMS) OF 806-1171 IN COMPLEX WITH SYNTHETIC INHIBITOR</scope>
</reference>
<reference key="55">
    <citation type="journal article" date="2007" name="J. Med. Chem.">
        <title>Evolution of a highly selective and potent 2-(pyridin-2-yl)-1,3,5-triazine Tie-2 kinase inhibitor.</title>
        <authorList>
            <person name="Hodous B.L."/>
            <person name="Geuns-Meyer S.D."/>
            <person name="Hughes P.E."/>
            <person name="Albrecht B.K."/>
            <person name="Bellon S."/>
            <person name="Bready J."/>
            <person name="Caenepeel S."/>
            <person name="Cee V.J."/>
            <person name="Chaffee S.C."/>
            <person name="Coxon A."/>
            <person name="Emery M."/>
            <person name="Fretland J."/>
            <person name="Gallant P."/>
            <person name="Gu Y."/>
            <person name="Hoffman D."/>
            <person name="Johnson R.E."/>
            <person name="Kendall R."/>
            <person name="Kim J.L."/>
            <person name="Long A.M."/>
            <person name="Morrison M."/>
            <person name="Olivieri P.R."/>
            <person name="Patel V.F."/>
            <person name="Polverino A."/>
            <person name="Rose P."/>
            <person name="Tempest P."/>
            <person name="Wang L."/>
            <person name="Whittington D.A."/>
            <person name="Zhao H."/>
        </authorList>
    </citation>
    <scope>X-RAY CRYSTALLOGRAPHY (1.95 ANGSTROMS) OF 815-1171 IN COMPLEX WITH SYNTHETIC INHIBITOR</scope>
</reference>
<reference key="56">
    <citation type="journal article" date="2008" name="J. Med. Chem.">
        <title>Design, synthesis, and biological evaluation of novel 3-aryl-4-(1H-indole-3yl)-1,5-dihydro-2H-pyrrole-2-ones as vascular endothelial growth factor receptor (VEGF-R) inhibitors.</title>
        <authorList>
            <person name="Peifer C."/>
            <person name="Selig R."/>
            <person name="Kinkel K."/>
            <person name="Ott D."/>
            <person name="Totzke F."/>
            <person name="Schaechtele C."/>
            <person name="Heidenreich R."/>
            <person name="Roecken M."/>
            <person name="Schollmeyer D."/>
            <person name="Laufer S."/>
        </authorList>
    </citation>
    <scope>X-RAY CRYSTALLOGRAPHY (2.1 ANGSTROMS) OF 806-1171 IN COMPLEX WITH SYNTHETIC INHIBITOR</scope>
    <scope>FUNCTION</scope>
</reference>
<reference key="57">
    <citation type="journal article" date="2010" name="Proc. Natl. Acad. Sci. U.S.A.">
        <title>Direct contacts between extracellular membrane-proximal domains are required for VEGF receptor activation and cell signaling.</title>
        <authorList>
            <person name="Yang Y."/>
            <person name="Xie P."/>
            <person name="Opatowsky Y."/>
            <person name="Schlessinger J."/>
        </authorList>
    </citation>
    <scope>X-RAY CRYSTALLOGRAPHY (2.70 ANGSTROMS) OF 657-764</scope>
    <scope>SUBUNIT</scope>
    <scope>AUTOPHOSPHORYLATION</scope>
    <scope>FUNCTION IN VEGFA SIGNALING AND ACTIVATION OF MAPK1/ERK2 AND MAPK3/ERK1</scope>
    <scope>MUTAGENESIS OF ARG-726 AND ASP-731</scope>
</reference>
<reference key="58">
    <citation type="journal article" date="2010" name="Proc. Natl. Acad. Sci. U.S.A.">
        <title>Structural determinants of growth factor binding and specificity by VEGF receptor 2.</title>
        <authorList>
            <person name="Leppanen V.M."/>
            <person name="Prota A.E."/>
            <person name="Jeltsch M."/>
            <person name="Anisimov A."/>
            <person name="Kalkkinen N."/>
            <person name="Strandin T."/>
            <person name="Lankinen H."/>
            <person name="Goldman A."/>
            <person name="Ballmer-Hofer K."/>
            <person name="Alitalo K."/>
        </authorList>
    </citation>
    <scope>X-RAY CRYSTALLOGRAPHY (2.70 ANGSTROMS) OF 120-326 IN COMPLEX WITH VEGFC</scope>
    <scope>INTERACTION WITH VEGFC</scope>
    <scope>DOMAIN</scope>
    <scope>DISULFIDE BONDS</scope>
    <scope>GLYCOSYLATION AT ASN-143; ASN-245 AND ASN-318</scope>
</reference>
<reference key="59">
    <citation type="journal article" date="2011" name="Structure">
        <title>The structural basis for the function of two anti-VEGF receptor 2 antibodies.</title>
        <authorList>
            <person name="Franklin M.C."/>
            <person name="Navarro E.C."/>
            <person name="Wang Y."/>
            <person name="Patel S."/>
            <person name="Singh P."/>
            <person name="Zhang Y."/>
            <person name="Persaud K."/>
            <person name="Bari A."/>
            <person name="Griffith H."/>
            <person name="Shen L."/>
            <person name="Balderes P."/>
            <person name="Kussie P."/>
        </authorList>
    </citation>
    <scope>X-RAY CRYSTALLOGRAPHY (2.2 ANGSTROMS) OF 220-338 IN COMPLEX WITH ANTIBODY FRAGMENT</scope>
    <scope>DISULFIDE BOND</scope>
    <scope>GLYCOSYLATION AT ASN-245 AND ASN-318</scope>
</reference>
<reference key="60">
    <citation type="journal article" date="2002" name="Genes Chromosomes Cancer">
        <title>Somatic mutation of vascular endothelial growth factor receptors in juvenile hemangioma.</title>
        <authorList>
            <person name="Walter J.W."/>
            <person name="North P.E."/>
            <person name="Waner M."/>
            <person name="Mizeracki A."/>
            <person name="Blei F."/>
            <person name="Walker J.W.T."/>
            <person name="Reinisch J.F."/>
            <person name="Marchuk D.A."/>
        </authorList>
    </citation>
    <scope>VARIANT HCI SER-1147</scope>
</reference>
<reference key="61">
    <citation type="journal article" date="2006" name="Science">
        <title>The consensus coding sequences of human breast and colorectal cancers.</title>
        <authorList>
            <person name="Sjoeblom T."/>
            <person name="Jones S."/>
            <person name="Wood L.D."/>
            <person name="Parsons D.W."/>
            <person name="Lin J."/>
            <person name="Barber T.D."/>
            <person name="Mandelker D."/>
            <person name="Leary R.J."/>
            <person name="Ptak J."/>
            <person name="Silliman N."/>
            <person name="Szabo S."/>
            <person name="Buckhaults P."/>
            <person name="Farrell C."/>
            <person name="Meeh P."/>
            <person name="Markowitz S.D."/>
            <person name="Willis J."/>
            <person name="Dawson D."/>
            <person name="Willson J.K.V."/>
            <person name="Gazdar A.F."/>
            <person name="Hartigan J."/>
            <person name="Wu L."/>
            <person name="Liu C."/>
            <person name="Parmigiani G."/>
            <person name="Park B.H."/>
            <person name="Bachman K.E."/>
            <person name="Papadopoulos N."/>
            <person name="Vogelstein B."/>
            <person name="Kinzler K.W."/>
            <person name="Velculescu V.E."/>
        </authorList>
    </citation>
    <scope>VARIANTS [LARGE SCALE ANALYSIS] LEU-275 AND ARG-873</scope>
</reference>
<reference key="62">
    <citation type="journal article" date="2007" name="Nature">
        <title>Patterns of somatic mutation in human cancer genomes.</title>
        <authorList>
            <person name="Greenman C."/>
            <person name="Stephens P."/>
            <person name="Smith R."/>
            <person name="Dalgliesh G.L."/>
            <person name="Hunter C."/>
            <person name="Bignell G."/>
            <person name="Davies H."/>
            <person name="Teague J."/>
            <person name="Butler A."/>
            <person name="Stevens C."/>
            <person name="Edkins S."/>
            <person name="O'Meara S."/>
            <person name="Vastrik I."/>
            <person name="Schmidt E.E."/>
            <person name="Avis T."/>
            <person name="Barthorpe S."/>
            <person name="Bhamra G."/>
            <person name="Buck G."/>
            <person name="Choudhury B."/>
            <person name="Clements J."/>
            <person name="Cole J."/>
            <person name="Dicks E."/>
            <person name="Forbes S."/>
            <person name="Gray K."/>
            <person name="Halliday K."/>
            <person name="Harrison R."/>
            <person name="Hills K."/>
            <person name="Hinton J."/>
            <person name="Jenkinson A."/>
            <person name="Jones D."/>
            <person name="Menzies A."/>
            <person name="Mironenko T."/>
            <person name="Perry J."/>
            <person name="Raine K."/>
            <person name="Richardson D."/>
            <person name="Shepherd R."/>
            <person name="Small A."/>
            <person name="Tofts C."/>
            <person name="Varian J."/>
            <person name="Webb T."/>
            <person name="West S."/>
            <person name="Widaa S."/>
            <person name="Yates A."/>
            <person name="Cahill D.P."/>
            <person name="Louis D.N."/>
            <person name="Goldstraw P."/>
            <person name="Nicholson A.G."/>
            <person name="Brasseur F."/>
            <person name="Looijenga L."/>
            <person name="Weber B.L."/>
            <person name="Chiew Y.-E."/>
            <person name="DeFazio A."/>
            <person name="Greaves M.F."/>
            <person name="Green A.R."/>
            <person name="Campbell P."/>
            <person name="Birney E."/>
            <person name="Easton D.F."/>
            <person name="Chenevix-Trench G."/>
            <person name="Tan M.-H."/>
            <person name="Khoo S.K."/>
            <person name="Teh B.T."/>
            <person name="Yuen S.T."/>
            <person name="Leung S.Y."/>
            <person name="Wooster R."/>
            <person name="Futreal P.A."/>
            <person name="Stratton M.R."/>
        </authorList>
    </citation>
    <scope>VARIANTS [LARGE SCALE ANALYSIS] ARG-2; MET-136; GLY-248; ILE-297; VAL-462; HIS-472; ARG-482; ARG-539; MET-689; ASN-814 AND THR-1065</scope>
</reference>
<reference key="63">
    <citation type="journal article" date="2008" name="Nat. Med.">
        <title>Suppressed NFAT-dependent VEGFR1 expression and constitutive VEGFR2 signaling in infantile hemangioma.</title>
        <authorList>
            <person name="Jinnin M."/>
            <person name="Medici D."/>
            <person name="Park L."/>
            <person name="Limaye N."/>
            <person name="Liu Y."/>
            <person name="Boscolo E."/>
            <person name="Bischoff J."/>
            <person name="Vikkula M."/>
            <person name="Boye E."/>
            <person name="Olsen B.R."/>
        </authorList>
    </citation>
    <scope>VARIANT ARG-482</scope>
    <scope>INVOLVEMENT IN HCI</scope>
</reference>
<feature type="signal peptide" evidence="3">
    <location>
        <begin position="1"/>
        <end position="19"/>
    </location>
</feature>
<feature type="chain" id="PRO_0000016771" description="Vascular endothelial growth factor receptor 2">
    <location>
        <begin position="20"/>
        <end position="1356"/>
    </location>
</feature>
<feature type="topological domain" description="Extracellular" evidence="3">
    <location>
        <begin position="20"/>
        <end position="764"/>
    </location>
</feature>
<feature type="transmembrane region" description="Helical" evidence="3">
    <location>
        <begin position="765"/>
        <end position="785"/>
    </location>
</feature>
<feature type="topological domain" description="Cytoplasmic" evidence="3">
    <location>
        <begin position="786"/>
        <end position="1356"/>
    </location>
</feature>
<feature type="domain" description="Ig-like C2-type 1">
    <location>
        <begin position="46"/>
        <end position="110"/>
    </location>
</feature>
<feature type="domain" description="Ig-like C2-type 2">
    <location>
        <begin position="141"/>
        <end position="207"/>
    </location>
</feature>
<feature type="domain" description="Ig-like C2-type 3">
    <location>
        <begin position="224"/>
        <end position="320"/>
    </location>
</feature>
<feature type="domain" description="Ig-like C2-type 4">
    <location>
        <begin position="328"/>
        <end position="414"/>
    </location>
</feature>
<feature type="domain" description="Ig-like C2-type 5">
    <location>
        <begin position="421"/>
        <end position="548"/>
    </location>
</feature>
<feature type="domain" description="Ig-like C2-type 6">
    <location>
        <begin position="551"/>
        <end position="660"/>
    </location>
</feature>
<feature type="domain" description="Ig-like C2-type 7">
    <location>
        <begin position="667"/>
        <end position="753"/>
    </location>
</feature>
<feature type="domain" description="Protein kinase" evidence="5">
    <location>
        <begin position="834"/>
        <end position="1162"/>
    </location>
</feature>
<feature type="region of interest" description="Disordered" evidence="7">
    <location>
        <begin position="1274"/>
        <end position="1318"/>
    </location>
</feature>
<feature type="compositionally biased region" description="Polar residues" evidence="7">
    <location>
        <begin position="1296"/>
        <end position="1309"/>
    </location>
</feature>
<feature type="active site" description="Proton acceptor" evidence="5 6">
    <location>
        <position position="1028"/>
    </location>
</feature>
<feature type="binding site" evidence="57">
    <location>
        <begin position="840"/>
        <end position="848"/>
    </location>
    <ligand>
        <name>ATP</name>
        <dbReference type="ChEBI" id="CHEBI:30616"/>
    </ligand>
</feature>
<feature type="binding site" evidence="57">
    <location>
        <position position="868"/>
    </location>
    <ligand>
        <name>ATP</name>
        <dbReference type="ChEBI" id="CHEBI:30616"/>
    </ligand>
</feature>
<feature type="site" description="Interaction with SHB" evidence="1">
    <location>
        <position position="1175"/>
    </location>
</feature>
<feature type="modified residue" description="Phosphotyrosine" evidence="28 33">
    <location>
        <position position="801"/>
    </location>
</feature>
<feature type="modified residue" description="Phosphotyrosine; by autocatalysis" evidence="22 33 35">
    <location>
        <position position="951"/>
    </location>
</feature>
<feature type="modified residue" description="Phosphoserine" evidence="59">
    <location>
        <position position="982"/>
    </location>
</feature>
<feature type="modified residue" description="Phosphoserine" evidence="59">
    <location>
        <position position="984"/>
    </location>
</feature>
<feature type="modified residue" description="Phosphotyrosine; by autocatalysis" evidence="9 33">
    <location>
        <position position="996"/>
    </location>
</feature>
<feature type="modified residue" description="Phosphotyrosine; by autocatalysis" evidence="8 9 19 22 33">
    <location>
        <position position="1054"/>
    </location>
</feature>
<feature type="modified residue" description="Phosphotyrosine; by autocatalysis" evidence="8 9 10 19 22 33">
    <location>
        <position position="1059"/>
    </location>
</feature>
<feature type="modified residue" description="Phosphotyrosine; by autocatalysis" evidence="13 33 35">
    <location>
        <position position="1175"/>
    </location>
</feature>
<feature type="modified residue" description="Phosphotyrosine; by autocatalysis" evidence="13 22 33 35">
    <location>
        <position position="1214"/>
    </location>
</feature>
<feature type="modified residue" description="Phosphoserine" evidence="2">
    <location>
        <position position="1231"/>
    </location>
</feature>
<feature type="modified residue" description="Phosphoserine" evidence="2">
    <location>
        <position position="1235"/>
    </location>
</feature>
<feature type="modified residue" description="Phosphothreonine" evidence="2">
    <location>
        <position position="1238"/>
    </location>
</feature>
<feature type="modified residue" description="Phosphotyrosine; by autocatalysis" evidence="22">
    <location>
        <position position="1305"/>
    </location>
</feature>
<feature type="modified residue" description="Phosphotyrosine; by autocatalysis" evidence="22">
    <location>
        <position position="1309"/>
    </location>
</feature>
<feature type="modified residue" description="Phosphotyrosine; by autocatalysis" evidence="22">
    <location>
        <position position="1319"/>
    </location>
</feature>
<feature type="glycosylation site" description="N-linked (GlcNAc...) asparagine" evidence="3">
    <location>
        <position position="46"/>
    </location>
</feature>
<feature type="glycosylation site" description="N-linked (GlcNAc...) asparagine" evidence="3">
    <location>
        <position position="66"/>
    </location>
</feature>
<feature type="glycosylation site" description="N-linked (GlcNAc...) asparagine" evidence="3">
    <location>
        <position position="96"/>
    </location>
</feature>
<feature type="glycosylation site" description="N-linked (GlcNAc...) asparagine" evidence="39">
    <location>
        <position position="143"/>
    </location>
</feature>
<feature type="glycosylation site" description="N-linked (GlcNAc...) asparagine" evidence="3">
    <location>
        <position position="158"/>
    </location>
</feature>
<feature type="glycosylation site" description="N-linked (GlcNAc...) asparagine" evidence="39 42">
    <location>
        <position position="245"/>
    </location>
</feature>
<feature type="glycosylation site" description="N-linked (GlcNAc...) asparagine" evidence="39 42">
    <location>
        <position position="318"/>
    </location>
</feature>
<feature type="glycosylation site" description="N-linked (GlcNAc...) asparagine" evidence="3">
    <location>
        <position position="374"/>
    </location>
</feature>
<feature type="glycosylation site" description="N-linked (GlcNAc...) asparagine" evidence="3">
    <location>
        <position position="395"/>
    </location>
</feature>
<feature type="glycosylation site" description="N-linked (GlcNAc...) asparagine" evidence="3">
    <location>
        <position position="511"/>
    </location>
</feature>
<feature type="glycosylation site" description="N-linked (GlcNAc...) asparagine" evidence="3">
    <location>
        <position position="523"/>
    </location>
</feature>
<feature type="glycosylation site" description="N-linked (GlcNAc...) asparagine" evidence="3">
    <location>
        <position position="580"/>
    </location>
</feature>
<feature type="glycosylation site" description="N-linked (GlcNAc...) asparagine" evidence="3">
    <location>
        <position position="613"/>
    </location>
</feature>
<feature type="glycosylation site" description="N-linked (GlcNAc...) asparagine" evidence="3">
    <location>
        <position position="619"/>
    </location>
</feature>
<feature type="glycosylation site" description="N-linked (GlcNAc...) asparagine" evidence="3">
    <location>
        <position position="631"/>
    </location>
</feature>
<feature type="glycosylation site" description="N-linked (GlcNAc...) asparagine" evidence="3">
    <location>
        <position position="675"/>
    </location>
</feature>
<feature type="glycosylation site" description="N-linked (GlcNAc...) asparagine" evidence="3">
    <location>
        <position position="704"/>
    </location>
</feature>
<feature type="glycosylation site" description="N-linked (GlcNAc...) asparagine" evidence="3">
    <location>
        <position position="721"/>
    </location>
</feature>
<feature type="disulfide bond" evidence="4">
    <location>
        <begin position="53"/>
        <end position="103"/>
    </location>
</feature>
<feature type="disulfide bond">
    <location>
        <begin position="150"/>
        <end position="200"/>
    </location>
</feature>
<feature type="disulfide bond">
    <location>
        <begin position="246"/>
        <end position="307"/>
    </location>
</feature>
<feature type="disulfide bond" evidence="4">
    <location>
        <begin position="445"/>
        <end position="530"/>
    </location>
</feature>
<feature type="disulfide bond" evidence="4">
    <location>
        <begin position="571"/>
        <end position="642"/>
    </location>
</feature>
<feature type="disulfide bond" evidence="4">
    <location>
        <begin position="688"/>
        <end position="737"/>
    </location>
</feature>
<feature type="disulfide bond" description="Redox-active">
    <location>
        <begin position="1024"/>
        <end position="1045"/>
    </location>
</feature>
<feature type="disulfide bond" description="Interchain (with C-189 in SLC31A1)" evidence="50">
    <location>
        <position position="1208"/>
    </location>
</feature>
<feature type="splice variant" id="VSP_041988" description="In isoform 2." evidence="56">
    <original>ERVAPTITGNLENQTT</original>
    <variation>GRETILDHCAEAVGMP</variation>
    <location>
        <begin position="663"/>
        <end position="678"/>
    </location>
</feature>
<feature type="splice variant" id="VSP_041989" description="In isoform 2." evidence="56">
    <location>
        <begin position="679"/>
        <end position="1356"/>
    </location>
</feature>
<feature type="splice variant" id="VSP_041990" description="In isoform 3." evidence="55">
    <original>G</original>
    <variation>E</variation>
    <location>
        <position position="712"/>
    </location>
</feature>
<feature type="splice variant" id="VSP_041991" description="In isoform 3." evidence="55">
    <location>
        <begin position="713"/>
        <end position="1356"/>
    </location>
</feature>
<feature type="sequence variant" id="VAR_042053" description="In a lung adenocarcinoma sample; somatic mutation." evidence="29">
    <original>Q</original>
    <variation>R</variation>
    <location>
        <position position="2"/>
    </location>
</feature>
<feature type="sequence variant" id="VAR_042054" description="In dbSNP:rs35636987." evidence="29">
    <original>V</original>
    <variation>M</variation>
    <location>
        <position position="136"/>
    </location>
</feature>
<feature type="sequence variant" id="VAR_042055" description="In a renal clear cell carcinoma sample; somatic mutation." evidence="29">
    <original>A</original>
    <variation>G</variation>
    <location>
        <position position="248"/>
    </location>
</feature>
<feature type="sequence variant" id="VAR_036126" description="In a colorectal cancer sample; somatic mutation." evidence="24">
    <original>R</original>
    <variation>L</variation>
    <location>
        <position position="275"/>
    </location>
</feature>
<feature type="sequence variant" id="VAR_022071" description="In dbSNP:rs2305948." evidence="29">
    <original>V</original>
    <variation>I</variation>
    <location>
        <position position="297"/>
    </location>
</feature>
<feature type="sequence variant" id="VAR_042056" description="In dbSNP:rs56286620." evidence="29">
    <original>L</original>
    <variation>V</variation>
    <location>
        <position position="462"/>
    </location>
</feature>
<feature type="sequence variant" id="VAR_020353" description="In dbSNP:rs1870377." evidence="20 29">
    <original>Q</original>
    <variation>H</variation>
    <location>
        <position position="472"/>
    </location>
</feature>
<feature type="sequence variant" id="VAR_042057" description="Probable risk factor for HCI; expression of FLT1 in hemangioma endothelial cells is markedly reduced and KDR activity is increased compared to controls; low FLT1 expression in hemangioma cells is caused by reduced activity of a pathway involving ITGB1, ANTXR1, KDR and NFATC2IP; the mutation predicts to result in loss-of-function and disruption of the normal association of these molecules; dbSNP:rs34231037." evidence="29 32">
    <original>C</original>
    <variation>R</variation>
    <location>
        <position position="482"/>
    </location>
</feature>
<feature type="sequence variant" id="VAR_042058" description="In dbSNP:rs55716939." evidence="29">
    <original>G</original>
    <variation>R</variation>
    <location>
        <position position="539"/>
    </location>
</feature>
<feature type="sequence variant" id="VAR_042059" description="In dbSNP:rs34038364." evidence="29">
    <original>T</original>
    <variation>M</variation>
    <location>
        <position position="689"/>
    </location>
</feature>
<feature type="sequence variant" id="VAR_042060" description="In dbSNP:rs35603373." evidence="29">
    <original>D</original>
    <variation>N</variation>
    <location>
        <position position="814"/>
    </location>
</feature>
<feature type="sequence variant" id="VAR_046679" description="Strongly reduced autophosphorylation and kinase activity; dbSNP:rs1139776." evidence="8 23">
    <original>V</original>
    <variation>E</variation>
    <location>
        <position position="848"/>
    </location>
</feature>
<feature type="sequence variant" id="VAR_036127" description="In a colorectal cancer sample; somatic mutation." evidence="24">
    <original>G</original>
    <variation>R</variation>
    <location>
        <position position="873"/>
    </location>
</feature>
<feature type="sequence variant" id="VAR_046680" description="In dbSNP:rs13129474.">
    <original>V</original>
    <variation>I</variation>
    <location>
        <position position="952"/>
    </location>
</feature>
<feature type="sequence variant" id="VAR_042061" description="In dbSNP:rs56302315." evidence="29">
    <original>A</original>
    <variation>T</variation>
    <location>
        <position position="1065"/>
    </location>
</feature>
<feature type="sequence variant" id="VAR_063147" description="In HCI; somatic mutation; dbSNP:rs121917766." evidence="14">
    <original>P</original>
    <variation>S</variation>
    <location>
        <position position="1147"/>
    </location>
</feature>
<feature type="mutagenesis site" description="Strongly reduced autophosphorylation and activation of MAP kinases." evidence="38">
    <original>R</original>
    <variation>A</variation>
    <location>
        <position position="726"/>
    </location>
</feature>
<feature type="mutagenesis site" description="Strongly reduced autophosphorylation and activation of MAP kinases." evidence="38">
    <original>D</original>
    <variation>A</variation>
    <location>
        <position position="731"/>
    </location>
</feature>
<feature type="mutagenesis site" description="Abolishes stimulation of nitric oxide synthesis." evidence="28">
    <original>Y</original>
    <variation>F</variation>
    <location>
        <position position="801"/>
    </location>
</feature>
<feature type="mutagenesis site" description="Loss of enzyme activity." evidence="13">
    <original>K</original>
    <variation>M</variation>
    <location>
        <position position="868"/>
    </location>
</feature>
<feature type="mutagenesis site" description="Abolishes reorganization of the actin cytoskeleton and cell migration in response to VEGFA." evidence="22">
    <original>Y</original>
    <variation>F</variation>
    <location>
        <position position="951"/>
    </location>
</feature>
<feature type="mutagenesis site" description="Strongly reduced autophosphorylation. Reduces phosphorylation of PLCG1." evidence="9">
    <original>Y</original>
    <variation>F</variation>
    <location>
        <position position="996"/>
    </location>
</feature>
<feature type="mutagenesis site" description="Significantly higher kinase activity." evidence="44">
    <original>C</original>
    <variation>A</variation>
    <location>
        <position position="1045"/>
    </location>
</feature>
<feature type="mutagenesis site" description="Strongly reduced autophosphorylation. Abolishes phosphorylation of downstream signaling proteins; when associated with F-1059." evidence="9">
    <original>Y</original>
    <variation>F</variation>
    <location>
        <position position="1054"/>
    </location>
</feature>
<feature type="mutagenesis site" description="Strongly reduced autophosphorylation. Abolishes phosphorylation of downstream signaling proteins; when associated with F-1054." evidence="9">
    <original>Y</original>
    <variation>F</variation>
    <location>
        <position position="1059"/>
    </location>
</feature>
<feature type="mutagenesis site" description="Abolishes phosphorylation of PLCG1 and MAP kinases in response to VEGFA." evidence="13">
    <original>Y</original>
    <variation>F</variation>
    <location>
        <position position="1175"/>
    </location>
</feature>
<feature type="mutagenesis site" description="Loss of phosphorylation site. Abolishes reorganization of the actin cytoskeleton in response to VEGFA." evidence="25">
    <original>Y</original>
    <variation>F</variation>
    <location>
        <position position="1214"/>
    </location>
</feature>
<feature type="sequence conflict" description="In Ref. 4; AAC16450." evidence="57" ref="4">
    <original>Q</original>
    <variation>E</variation>
    <location>
        <position position="2"/>
    </location>
</feature>
<feature type="sequence conflict" description="In Ref. 7; AAA59459/CAA43837." evidence="57" ref="7">
    <original>A</original>
    <variation>T</variation>
    <location>
        <position position="772"/>
    </location>
</feature>
<feature type="sequence conflict" description="In Ref. 7; AAA59459/CAA43837." evidence="57" ref="7">
    <original>R</original>
    <variation>G</variation>
    <location>
        <position position="787"/>
    </location>
</feature>
<feature type="sequence conflict" description="In Ref. 7; AAA59459/CAA43837." evidence="57" ref="7">
    <original>K</original>
    <variation>N</variation>
    <location>
        <position position="835"/>
    </location>
</feature>
<feature type="sequence conflict" description="In Ref. 7; AAA59459/CAA43837." evidence="57" ref="7">
    <original>S</original>
    <variation>T</variation>
    <location>
        <position position="1347"/>
    </location>
</feature>
<feature type="strand" evidence="61">
    <location>
        <begin position="134"/>
        <end position="138"/>
    </location>
</feature>
<feature type="strand" evidence="61">
    <location>
        <begin position="145"/>
        <end position="148"/>
    </location>
</feature>
<feature type="strand" evidence="61">
    <location>
        <begin position="152"/>
        <end position="154"/>
    </location>
</feature>
<feature type="strand" evidence="61">
    <location>
        <begin position="159"/>
        <end position="164"/>
    </location>
</feature>
<feature type="turn" evidence="61">
    <location>
        <begin position="165"/>
        <end position="167"/>
    </location>
</feature>
<feature type="strand" evidence="61">
    <location>
        <begin position="168"/>
        <end position="170"/>
    </location>
</feature>
<feature type="strand" evidence="61">
    <location>
        <begin position="174"/>
        <end position="176"/>
    </location>
</feature>
<feature type="strand" evidence="61">
    <location>
        <begin position="178"/>
        <end position="180"/>
    </location>
</feature>
<feature type="turn" evidence="61">
    <location>
        <begin position="181"/>
        <end position="183"/>
    </location>
</feature>
<feature type="strand" evidence="61">
    <location>
        <begin position="184"/>
        <end position="188"/>
    </location>
</feature>
<feature type="helix" evidence="61">
    <location>
        <begin position="189"/>
        <end position="191"/>
    </location>
</feature>
<feature type="turn" evidence="61">
    <location>
        <begin position="192"/>
        <end position="194"/>
    </location>
</feature>
<feature type="strand" evidence="61">
    <location>
        <begin position="196"/>
        <end position="202"/>
    </location>
</feature>
<feature type="strand" evidence="66">
    <location>
        <begin position="207"/>
        <end position="210"/>
    </location>
</feature>
<feature type="strand" evidence="61">
    <location>
        <begin position="214"/>
        <end position="218"/>
    </location>
</feature>
<feature type="strand" evidence="65">
    <location>
        <begin position="223"/>
        <end position="230"/>
    </location>
</feature>
<feature type="strand" evidence="65">
    <location>
        <begin position="234"/>
        <end position="238"/>
    </location>
</feature>
<feature type="strand" evidence="65">
    <location>
        <begin position="242"/>
        <end position="250"/>
    </location>
</feature>
<feature type="strand" evidence="67">
    <location>
        <begin position="252"/>
        <end position="254"/>
    </location>
</feature>
<feature type="strand" evidence="65">
    <location>
        <begin position="257"/>
        <end position="261"/>
    </location>
</feature>
<feature type="helix" evidence="65">
    <location>
        <begin position="269"/>
        <end position="272"/>
    </location>
</feature>
<feature type="strand" evidence="66">
    <location>
        <begin position="273"/>
        <end position="276"/>
    </location>
</feature>
<feature type="strand" evidence="65">
    <location>
        <begin position="279"/>
        <end position="282"/>
    </location>
</feature>
<feature type="strand" evidence="65">
    <location>
        <begin position="285"/>
        <end position="296"/>
    </location>
</feature>
<feature type="helix" evidence="65">
    <location>
        <begin position="299"/>
        <end position="301"/>
    </location>
</feature>
<feature type="strand" evidence="65">
    <location>
        <begin position="303"/>
        <end position="310"/>
    </location>
</feature>
<feature type="strand" evidence="65">
    <location>
        <begin position="315"/>
        <end position="328"/>
    </location>
</feature>
<feature type="strand" evidence="73">
    <location>
        <begin position="338"/>
        <end position="343"/>
    </location>
</feature>
<feature type="strand" evidence="73">
    <location>
        <begin position="348"/>
        <end position="351"/>
    </location>
</feature>
<feature type="strand" evidence="73">
    <location>
        <begin position="354"/>
        <end position="358"/>
    </location>
</feature>
<feature type="strand" evidence="73">
    <location>
        <begin position="361"/>
        <end position="366"/>
    </location>
</feature>
<feature type="strand" evidence="73">
    <location>
        <begin position="377"/>
        <end position="387"/>
    </location>
</feature>
<feature type="helix" evidence="73">
    <location>
        <begin position="390"/>
        <end position="392"/>
    </location>
</feature>
<feature type="strand" evidence="73">
    <location>
        <begin position="394"/>
        <end position="401"/>
    </location>
</feature>
<feature type="turn" evidence="73">
    <location>
        <begin position="403"/>
        <end position="405"/>
    </location>
</feature>
<feature type="strand" evidence="73">
    <location>
        <begin position="408"/>
        <end position="425"/>
    </location>
</feature>
<feature type="strand" evidence="73">
    <location>
        <begin position="434"/>
        <end position="436"/>
    </location>
</feature>
<feature type="strand" evidence="73">
    <location>
        <begin position="441"/>
        <end position="451"/>
    </location>
</feature>
<feature type="strand" evidence="73">
    <location>
        <begin position="454"/>
        <end position="462"/>
    </location>
</feature>
<feature type="helix" evidence="73">
    <location>
        <begin position="463"/>
        <end position="465"/>
    </location>
</feature>
<feature type="strand" evidence="73">
    <location>
        <begin position="482"/>
        <end position="484"/>
    </location>
</feature>
<feature type="strand" evidence="73">
    <location>
        <begin position="497"/>
        <end position="499"/>
    </location>
</feature>
<feature type="strand" evidence="73">
    <location>
        <begin position="503"/>
        <end position="507"/>
    </location>
</feature>
<feature type="strand" evidence="73">
    <location>
        <begin position="510"/>
        <end position="521"/>
    </location>
</feature>
<feature type="strand" evidence="73">
    <location>
        <begin position="526"/>
        <end position="534"/>
    </location>
</feature>
<feature type="strand" evidence="73">
    <location>
        <begin position="537"/>
        <end position="548"/>
    </location>
</feature>
<feature type="strand" evidence="64">
    <location>
        <begin position="676"/>
        <end position="679"/>
    </location>
</feature>
<feature type="strand" evidence="64">
    <location>
        <begin position="684"/>
        <end position="687"/>
    </location>
</feature>
<feature type="strand" evidence="64">
    <location>
        <begin position="697"/>
        <end position="706"/>
    </location>
</feature>
<feature type="strand" evidence="64">
    <location>
        <begin position="713"/>
        <end position="716"/>
    </location>
</feature>
<feature type="turn" evidence="64">
    <location>
        <begin position="717"/>
        <end position="720"/>
    </location>
</feature>
<feature type="strand" evidence="64">
    <location>
        <begin position="721"/>
        <end position="724"/>
    </location>
</feature>
<feature type="helix" evidence="64">
    <location>
        <begin position="729"/>
        <end position="731"/>
    </location>
</feature>
<feature type="strand" evidence="64">
    <location>
        <begin position="733"/>
        <end position="740"/>
    </location>
</feature>
<feature type="strand" evidence="64">
    <location>
        <begin position="746"/>
        <end position="755"/>
    </location>
</feature>
<feature type="helix" evidence="60">
    <location>
        <begin position="760"/>
        <end position="794"/>
    </location>
</feature>
<feature type="strand" evidence="71">
    <location>
        <begin position="804"/>
        <end position="806"/>
    </location>
</feature>
<feature type="turn" evidence="72">
    <location>
        <begin position="808"/>
        <end position="810"/>
    </location>
</feature>
<feature type="turn" evidence="68">
    <location>
        <begin position="813"/>
        <end position="815"/>
    </location>
</feature>
<feature type="helix" evidence="62">
    <location>
        <begin position="817"/>
        <end position="819"/>
    </location>
</feature>
<feature type="helix" evidence="62">
    <location>
        <begin position="824"/>
        <end position="827"/>
    </location>
</feature>
<feature type="helix" evidence="62">
    <location>
        <begin position="831"/>
        <end position="833"/>
    </location>
</feature>
<feature type="strand" evidence="62">
    <location>
        <begin position="834"/>
        <end position="842"/>
    </location>
</feature>
<feature type="strand" evidence="62">
    <location>
        <begin position="844"/>
        <end position="858"/>
    </location>
</feature>
<feature type="strand" evidence="62">
    <location>
        <begin position="862"/>
        <end position="870"/>
    </location>
</feature>
<feature type="helix" evidence="62">
    <location>
        <begin position="876"/>
        <end position="892"/>
    </location>
</feature>
<feature type="strand" evidence="62">
    <location>
        <begin position="901"/>
        <end position="905"/>
    </location>
</feature>
<feature type="strand" evidence="70">
    <location>
        <begin position="907"/>
        <end position="910"/>
    </location>
</feature>
<feature type="strand" evidence="62">
    <location>
        <begin position="913"/>
        <end position="917"/>
    </location>
</feature>
<feature type="helix" evidence="62">
    <location>
        <begin position="924"/>
        <end position="929"/>
    </location>
</feature>
<feature type="turn" evidence="69">
    <location>
        <begin position="930"/>
        <end position="933"/>
    </location>
</feature>
<feature type="strand" evidence="62">
    <location>
        <begin position="934"/>
        <end position="936"/>
    </location>
</feature>
<feature type="turn" evidence="69">
    <location>
        <begin position="995"/>
        <end position="998"/>
    </location>
</feature>
<feature type="helix" evidence="62">
    <location>
        <begin position="1002"/>
        <end position="1021"/>
    </location>
</feature>
<feature type="strand" evidence="71">
    <location>
        <begin position="1024"/>
        <end position="1026"/>
    </location>
</feature>
<feature type="helix" evidence="62">
    <location>
        <begin position="1031"/>
        <end position="1033"/>
    </location>
</feature>
<feature type="strand" evidence="62">
    <location>
        <begin position="1034"/>
        <end position="1036"/>
    </location>
</feature>
<feature type="helix" evidence="62">
    <location>
        <begin position="1038"/>
        <end position="1040"/>
    </location>
</feature>
<feature type="strand" evidence="62">
    <location>
        <begin position="1042"/>
        <end position="1044"/>
    </location>
</feature>
<feature type="helix" evidence="62">
    <location>
        <begin position="1048"/>
        <end position="1050"/>
    </location>
</feature>
<feature type="turn" evidence="62">
    <location>
        <begin position="1053"/>
        <end position="1055"/>
    </location>
</feature>
<feature type="strand" evidence="62">
    <location>
        <begin position="1059"/>
        <end position="1062"/>
    </location>
</feature>
<feature type="strand" evidence="62">
    <location>
        <begin position="1065"/>
        <end position="1067"/>
    </location>
</feature>
<feature type="helix" evidence="62">
    <location>
        <begin position="1069"/>
        <end position="1071"/>
    </location>
</feature>
<feature type="helix" evidence="62">
    <location>
        <begin position="1074"/>
        <end position="1079"/>
    </location>
</feature>
<feature type="helix" evidence="62">
    <location>
        <begin position="1084"/>
        <end position="1099"/>
    </location>
</feature>
<feature type="strand" evidence="63">
    <location>
        <begin position="1105"/>
        <end position="1108"/>
    </location>
</feature>
<feature type="helix" evidence="62">
    <location>
        <begin position="1113"/>
        <end position="1121"/>
    </location>
</feature>
<feature type="helix" evidence="62">
    <location>
        <begin position="1133"/>
        <end position="1142"/>
    </location>
</feature>
<feature type="helix" evidence="62">
    <location>
        <begin position="1147"/>
        <end position="1149"/>
    </location>
</feature>
<feature type="helix" evidence="62">
    <location>
        <begin position="1153"/>
        <end position="1167"/>
    </location>
</feature>
<sequence>MQSKVLLAVALWLCVETRAASVGLPSVSLDLPRLSIQKDILTIKANTTLQITCRGQRDLDWLWPNNQSGSEQRVEVTECSDGLFCKTLTIPKVIGNDTGAYKCFYRETDLASVIYVYVQDYRSPFIASVSDQHGVVYITENKNKTVVIPCLGSISNLNVSLCARYPEKRFVPDGNRISWDSKKGFTIPSYMISYAGMVFCEAKINDESYQSIMYIVVVVGYRIYDVVLSPSHGIELSVGEKLVLNCTARTELNVGIDFNWEYPSSKHQHKKLVNRDLKTQSGSEMKKFLSTLTIDGVTRSDQGLYTCAASSGLMTKKNSTFVRVHEKPFVAFGSGMESLVEATVGERVRIPAKYLGYPPPEIKWYKNGIPLESNHTIKAGHVLTIMEVSERDTGNYTVILTNPISKEKQSHVVSLVVYVPPQIGEKSLISPVDSYQYGTTQTLTCTVYAIPPPHHIHWYWQLEEECANEPSQAVSVTNPYPCEEWRSVEDFQGGNKIEVNKNQFALIEGKNKTVSTLVIQAANVSALYKCEAVNKVGRGERVISFHVTRGPEITLQPDMQPTEQESVSLWCTADRSTFENLTWYKLGPQPLPIHVGELPTPVCKNLDTLWKLNATMFSNSTNDILIMELKNASLQDQGDYVCLAQDRKTKKRHCVVRQLTVLERVAPTITGNLENQTTSIGESIEVSCTASGNPPPQIMWFKDNETLVEDSGIVLKDGNRNLTIRRVRKEDEGLYTCQACSVLGCAKVEAFFIIEGAQEKTNLEIIILVGTAVIAMFFWLLLVIILRTVKRANGGELKTGYLSIVMDPDELPLDEHCERLPYDASKWEFPRDRLKLGKPLGRGAFGQVIEADAFGIDKTATCRTVAVKMLKEGATHSEHRALMSELKILIHIGHHLNVVNLLGACTKPGGPLMVIVEFCKFGNLSTYLRSKRNEFVPYKTKGARFRQGKDYVGAIPVDLKRRLDSITSSQSSASSGFVEEKSLSDVEEEEAPEDLYKDFLTLEHLICYSFQVAKGMEFLASRKCIHRDLAARNILLSEKNVVKICDFGLARDIYKDPDYVRKGDARLPLKWMAPETIFDRVYTIQSDVWSFGVLLWEIFSLGASPYPGVKIDEEFCRRLKEGTRMRAPDYTTPEMYQTMLDCWHGEPSQRPTFSELVEHLGNLLQANAQQDGKDYIVLPISETLSMEEDSGLSLPTSPVSCMEEEEVCDPKFHYDNTAGISQYLQNSKRKSRPVSVKTFEDIPLEEPEVKVIPDDNQTDSGMVLASEELKTLEDRTKLSPSFGGMVPSKSRESVASEGSNQTSGYQSGYHSDDTDTTVYSSEEAELLKLIEIGVQTGSTAQILQPDSGTTLSSPPV</sequence>
<dbReference type="EC" id="2.7.10.1" evidence="8 9"/>
<dbReference type="EMBL" id="EU826563">
    <property type="protein sequence ID" value="ACF47599.1"/>
    <property type="molecule type" value="mRNA"/>
</dbReference>
<dbReference type="EMBL" id="FJ899739">
    <property type="protein sequence ID" value="ACR78514.1"/>
    <property type="molecule type" value="mRNA"/>
</dbReference>
<dbReference type="EMBL" id="AF035121">
    <property type="protein sequence ID" value="AAB88005.1"/>
    <property type="molecule type" value="mRNA"/>
</dbReference>
<dbReference type="EMBL" id="AF063658">
    <property type="protein sequence ID" value="AAC16450.1"/>
    <property type="molecule type" value="mRNA"/>
</dbReference>
<dbReference type="EMBL" id="AC021220">
    <property type="status" value="NOT_ANNOTATED_CDS"/>
    <property type="molecule type" value="Genomic_DNA"/>
</dbReference>
<dbReference type="EMBL" id="AC111194">
    <property type="status" value="NOT_ANNOTATED_CDS"/>
    <property type="molecule type" value="Genomic_DNA"/>
</dbReference>
<dbReference type="EMBL" id="BC131822">
    <property type="protein sequence ID" value="AAI31823.1"/>
    <property type="molecule type" value="mRNA"/>
</dbReference>
<dbReference type="EMBL" id="L04947">
    <property type="protein sequence ID" value="AAA59459.1"/>
    <property type="molecule type" value="mRNA"/>
</dbReference>
<dbReference type="EMBL" id="X61656">
    <property type="protein sequence ID" value="CAA43837.1"/>
    <property type="molecule type" value="mRNA"/>
</dbReference>
<dbReference type="EMBL" id="X89776">
    <property type="protein sequence ID" value="CAA61916.1"/>
    <property type="molecule type" value="Genomic_DNA"/>
</dbReference>
<dbReference type="CCDS" id="CCDS3497.1">
    <molecule id="P35968-1"/>
</dbReference>
<dbReference type="PIR" id="JC1402">
    <property type="entry name" value="JC1402"/>
</dbReference>
<dbReference type="RefSeq" id="NP_002244.1">
    <molecule id="P35968-1"/>
    <property type="nucleotide sequence ID" value="NM_002253.4"/>
</dbReference>
<dbReference type="PDB" id="1VR2">
    <property type="method" value="X-ray"/>
    <property type="resolution" value="2.40 A"/>
    <property type="chains" value="A=806-1171"/>
</dbReference>
<dbReference type="PDB" id="1Y6A">
    <property type="method" value="X-ray"/>
    <property type="resolution" value="2.10 A"/>
    <property type="chains" value="A=806-1171"/>
</dbReference>
<dbReference type="PDB" id="1Y6B">
    <property type="method" value="X-ray"/>
    <property type="resolution" value="2.10 A"/>
    <property type="chains" value="A=806-1171"/>
</dbReference>
<dbReference type="PDB" id="1YWN">
    <property type="method" value="X-ray"/>
    <property type="resolution" value="1.71 A"/>
    <property type="chains" value="A=806-1171"/>
</dbReference>
<dbReference type="PDB" id="2M59">
    <property type="method" value="NMR"/>
    <property type="chains" value="A/B=759-795"/>
</dbReference>
<dbReference type="PDB" id="2MET">
    <property type="method" value="NMR"/>
    <property type="chains" value="A/B/C=759-795"/>
</dbReference>
<dbReference type="PDB" id="2MEU">
    <property type="method" value="NMR"/>
    <property type="chains" value="A/B=759-795"/>
</dbReference>
<dbReference type="PDB" id="2OH4">
    <property type="method" value="X-ray"/>
    <property type="resolution" value="2.05 A"/>
    <property type="chains" value="A=806-1171"/>
</dbReference>
<dbReference type="PDB" id="2P2H">
    <property type="method" value="X-ray"/>
    <property type="resolution" value="1.95 A"/>
    <property type="chains" value="A=815-1171"/>
</dbReference>
<dbReference type="PDB" id="2P2I">
    <property type="method" value="X-ray"/>
    <property type="resolution" value="2.40 A"/>
    <property type="chains" value="A/B=815-1171"/>
</dbReference>
<dbReference type="PDB" id="2QU5">
    <property type="method" value="X-ray"/>
    <property type="resolution" value="2.95 A"/>
    <property type="chains" value="A=815-1171"/>
</dbReference>
<dbReference type="PDB" id="2QU6">
    <property type="method" value="X-ray"/>
    <property type="resolution" value="2.10 A"/>
    <property type="chains" value="A/B=815-1171"/>
</dbReference>
<dbReference type="PDB" id="2RL5">
    <property type="method" value="X-ray"/>
    <property type="resolution" value="2.65 A"/>
    <property type="chains" value="A=815-1171"/>
</dbReference>
<dbReference type="PDB" id="2X1W">
    <property type="method" value="X-ray"/>
    <property type="resolution" value="2.70 A"/>
    <property type="chains" value="L/M/N/O=120-326"/>
</dbReference>
<dbReference type="PDB" id="2X1X">
    <property type="method" value="X-ray"/>
    <property type="resolution" value="3.10 A"/>
    <property type="chains" value="R=120-326"/>
</dbReference>
<dbReference type="PDB" id="2XIR">
    <property type="method" value="X-ray"/>
    <property type="resolution" value="1.50 A"/>
    <property type="chains" value="A=806-1171"/>
</dbReference>
<dbReference type="PDB" id="3B8Q">
    <property type="method" value="X-ray"/>
    <property type="resolution" value="2.75 A"/>
    <property type="chains" value="A/B=815-1171"/>
</dbReference>
<dbReference type="PDB" id="3B8R">
    <property type="method" value="X-ray"/>
    <property type="resolution" value="2.70 A"/>
    <property type="chains" value="A/B=815-1171"/>
</dbReference>
<dbReference type="PDB" id="3BE2">
    <property type="method" value="X-ray"/>
    <property type="resolution" value="1.75 A"/>
    <property type="chains" value="A=815-1171"/>
</dbReference>
<dbReference type="PDB" id="3C7Q">
    <property type="method" value="X-ray"/>
    <property type="resolution" value="2.10 A"/>
    <property type="chains" value="A=806-1171"/>
</dbReference>
<dbReference type="PDB" id="3CJF">
    <property type="method" value="X-ray"/>
    <property type="resolution" value="2.15 A"/>
    <property type="chains" value="A=806-1168"/>
</dbReference>
<dbReference type="PDB" id="3CJG">
    <property type="method" value="X-ray"/>
    <property type="resolution" value="2.25 A"/>
    <property type="chains" value="A=806-1168"/>
</dbReference>
<dbReference type="PDB" id="3CP9">
    <property type="method" value="X-ray"/>
    <property type="resolution" value="2.50 A"/>
    <property type="chains" value="A/B=815-1171"/>
</dbReference>
<dbReference type="PDB" id="3CPB">
    <property type="method" value="X-ray"/>
    <property type="resolution" value="2.70 A"/>
    <property type="chains" value="A/B=815-1171"/>
</dbReference>
<dbReference type="PDB" id="3CPC">
    <property type="method" value="X-ray"/>
    <property type="resolution" value="2.40 A"/>
    <property type="chains" value="A/B=815-1171"/>
</dbReference>
<dbReference type="PDB" id="3DTW">
    <property type="method" value="X-ray"/>
    <property type="resolution" value="2.90 A"/>
    <property type="chains" value="A/B=815-1171"/>
</dbReference>
<dbReference type="PDB" id="3EFL">
    <property type="method" value="X-ray"/>
    <property type="resolution" value="2.20 A"/>
    <property type="chains" value="A/B=815-1171"/>
</dbReference>
<dbReference type="PDB" id="3EWH">
    <property type="method" value="X-ray"/>
    <property type="resolution" value="1.60 A"/>
    <property type="chains" value="A=815-1171"/>
</dbReference>
<dbReference type="PDB" id="3KVQ">
    <property type="method" value="X-ray"/>
    <property type="resolution" value="2.70 A"/>
    <property type="chains" value="A=657-764"/>
</dbReference>
<dbReference type="PDB" id="3S35">
    <property type="method" value="X-ray"/>
    <property type="resolution" value="2.20 A"/>
    <property type="chains" value="X=220-338"/>
</dbReference>
<dbReference type="PDB" id="3S36">
    <property type="method" value="X-ray"/>
    <property type="resolution" value="3.20 A"/>
    <property type="chains" value="X=220-338"/>
</dbReference>
<dbReference type="PDB" id="3S37">
    <property type="method" value="X-ray"/>
    <property type="resolution" value="2.70 A"/>
    <property type="chains" value="X=220-338"/>
</dbReference>
<dbReference type="PDB" id="3U6J">
    <property type="method" value="X-ray"/>
    <property type="resolution" value="2.15 A"/>
    <property type="chains" value="A=815-1171"/>
</dbReference>
<dbReference type="PDB" id="3V2A">
    <property type="method" value="X-ray"/>
    <property type="resolution" value="3.20 A"/>
    <property type="chains" value="R=2-764"/>
</dbReference>
<dbReference type="PDB" id="3V6B">
    <property type="method" value="X-ray"/>
    <property type="resolution" value="3.20 A"/>
    <property type="chains" value="R=132-548"/>
</dbReference>
<dbReference type="PDB" id="3VHE">
    <property type="method" value="X-ray"/>
    <property type="resolution" value="1.55 A"/>
    <property type="chains" value="A=811-1169"/>
</dbReference>
<dbReference type="PDB" id="3VHK">
    <property type="method" value="X-ray"/>
    <property type="resolution" value="2.49 A"/>
    <property type="chains" value="A=806-1171"/>
</dbReference>
<dbReference type="PDB" id="3VID">
    <property type="method" value="X-ray"/>
    <property type="resolution" value="2.30 A"/>
    <property type="chains" value="A=813-1168"/>
</dbReference>
<dbReference type="PDB" id="3VNT">
    <property type="method" value="X-ray"/>
    <property type="resolution" value="1.64 A"/>
    <property type="chains" value="A=806-1171"/>
</dbReference>
<dbReference type="PDB" id="3VO3">
    <property type="method" value="X-ray"/>
    <property type="resolution" value="1.52 A"/>
    <property type="chains" value="A=806-1171"/>
</dbReference>
<dbReference type="PDB" id="3WZD">
    <property type="method" value="X-ray"/>
    <property type="resolution" value="1.57 A"/>
    <property type="chains" value="A=814-1172"/>
</dbReference>
<dbReference type="PDB" id="3WZE">
    <property type="method" value="X-ray"/>
    <property type="resolution" value="1.90 A"/>
    <property type="chains" value="A=814-1172"/>
</dbReference>
<dbReference type="PDB" id="4AG8">
    <property type="method" value="X-ray"/>
    <property type="resolution" value="1.95 A"/>
    <property type="chains" value="A=806-1171"/>
</dbReference>
<dbReference type="PDB" id="4AGC">
    <property type="method" value="X-ray"/>
    <property type="resolution" value="2.00 A"/>
    <property type="chains" value="A=787-1171"/>
</dbReference>
<dbReference type="PDB" id="4AGD">
    <property type="method" value="X-ray"/>
    <property type="resolution" value="2.81 A"/>
    <property type="chains" value="A=787-1171"/>
</dbReference>
<dbReference type="PDB" id="4ASD">
    <property type="method" value="X-ray"/>
    <property type="resolution" value="2.03 A"/>
    <property type="chains" value="A=787-1171"/>
</dbReference>
<dbReference type="PDB" id="4ASE">
    <property type="method" value="X-ray"/>
    <property type="resolution" value="1.83 A"/>
    <property type="chains" value="A=787-1171"/>
</dbReference>
<dbReference type="PDB" id="5EW3">
    <property type="method" value="X-ray"/>
    <property type="resolution" value="2.50 A"/>
    <property type="chains" value="A/B=806-1171"/>
</dbReference>
<dbReference type="PDB" id="5OYJ">
    <property type="method" value="X-ray"/>
    <property type="resolution" value="2.38 A"/>
    <property type="chains" value="C/D=326-549"/>
</dbReference>
<dbReference type="PDB" id="6GQO">
    <property type="method" value="X-ray"/>
    <property type="resolution" value="1.87 A"/>
    <property type="chains" value="A=806-939, A=991-1171"/>
</dbReference>
<dbReference type="PDB" id="6GQP">
    <property type="method" value="X-ray"/>
    <property type="resolution" value="2.09 A"/>
    <property type="chains" value="A=806-1171"/>
</dbReference>
<dbReference type="PDB" id="6GQQ">
    <property type="method" value="X-ray"/>
    <property type="resolution" value="1.52 A"/>
    <property type="chains" value="A=806-939, A=991-1171"/>
</dbReference>
<dbReference type="PDB" id="6XVJ">
    <property type="method" value="X-ray"/>
    <property type="resolution" value="1.78 A"/>
    <property type="chains" value="A=806-1171"/>
</dbReference>
<dbReference type="PDB" id="6XVK">
    <property type="method" value="X-ray"/>
    <property type="resolution" value="1.99 A"/>
    <property type="chains" value="A=806-1171"/>
</dbReference>
<dbReference type="PDBsum" id="1VR2"/>
<dbReference type="PDBsum" id="1Y6A"/>
<dbReference type="PDBsum" id="1Y6B"/>
<dbReference type="PDBsum" id="1YWN"/>
<dbReference type="PDBsum" id="2M59"/>
<dbReference type="PDBsum" id="2MET"/>
<dbReference type="PDBsum" id="2MEU"/>
<dbReference type="PDBsum" id="2OH4"/>
<dbReference type="PDBsum" id="2P2H"/>
<dbReference type="PDBsum" id="2P2I"/>
<dbReference type="PDBsum" id="2QU5"/>
<dbReference type="PDBsum" id="2QU6"/>
<dbReference type="PDBsum" id="2RL5"/>
<dbReference type="PDBsum" id="2X1W"/>
<dbReference type="PDBsum" id="2X1X"/>
<dbReference type="PDBsum" id="2XIR"/>
<dbReference type="PDBsum" id="3B8Q"/>
<dbReference type="PDBsum" id="3B8R"/>
<dbReference type="PDBsum" id="3BE2"/>
<dbReference type="PDBsum" id="3C7Q"/>
<dbReference type="PDBsum" id="3CJF"/>
<dbReference type="PDBsum" id="3CJG"/>
<dbReference type="PDBsum" id="3CP9"/>
<dbReference type="PDBsum" id="3CPB"/>
<dbReference type="PDBsum" id="3CPC"/>
<dbReference type="PDBsum" id="3DTW"/>
<dbReference type="PDBsum" id="3EFL"/>
<dbReference type="PDBsum" id="3EWH"/>
<dbReference type="PDBsum" id="3KVQ"/>
<dbReference type="PDBsum" id="3S35"/>
<dbReference type="PDBsum" id="3S36"/>
<dbReference type="PDBsum" id="3S37"/>
<dbReference type="PDBsum" id="3U6J"/>
<dbReference type="PDBsum" id="3V2A"/>
<dbReference type="PDBsum" id="3V6B"/>
<dbReference type="PDBsum" id="3VHE"/>
<dbReference type="PDBsum" id="3VHK"/>
<dbReference type="PDBsum" id="3VID"/>
<dbReference type="PDBsum" id="3VNT"/>
<dbReference type="PDBsum" id="3VO3"/>
<dbReference type="PDBsum" id="3WZD"/>
<dbReference type="PDBsum" id="3WZE"/>
<dbReference type="PDBsum" id="4AG8"/>
<dbReference type="PDBsum" id="4AGC"/>
<dbReference type="PDBsum" id="4AGD"/>
<dbReference type="PDBsum" id="4ASD"/>
<dbReference type="PDBsum" id="4ASE"/>
<dbReference type="PDBsum" id="5EW3"/>
<dbReference type="PDBsum" id="5OYJ"/>
<dbReference type="PDBsum" id="6GQO"/>
<dbReference type="PDBsum" id="6GQP"/>
<dbReference type="PDBsum" id="6GQQ"/>
<dbReference type="PDBsum" id="6XVJ"/>
<dbReference type="PDBsum" id="6XVK"/>
<dbReference type="BMRB" id="P35968"/>
<dbReference type="SMR" id="P35968"/>
<dbReference type="BioGRID" id="109992">
    <property type="interactions" value="135"/>
</dbReference>
<dbReference type="CORUM" id="P35968"/>
<dbReference type="DIP" id="DIP-486N"/>
<dbReference type="FunCoup" id="P35968">
    <property type="interactions" value="1746"/>
</dbReference>
<dbReference type="IntAct" id="P35968">
    <property type="interactions" value="224"/>
</dbReference>
<dbReference type="MINT" id="P35968"/>
<dbReference type="STRING" id="9606.ENSP00000263923"/>
<dbReference type="BindingDB" id="P35968"/>
<dbReference type="ChEMBL" id="CHEMBL279"/>
<dbReference type="DrugBank" id="DB04727">
    <property type="generic name" value="1-{4-[4-Amino-6-(4-methoxyphenyl)furo[2,3-d]pyrimidin-5-yl]phenyl}-3-[2-fluoro-5-(trifluoromethyl)phenyl]urea"/>
</dbReference>
<dbReference type="DrugBank" id="DB07514">
    <property type="generic name" value="3-(2-aminoquinazolin-6-yl)-1-(3,3-dimethylindolin-6-yl)-4-methylpyridin-2(1H)-one"/>
</dbReference>
<dbReference type="DrugBank" id="DB07528">
    <property type="generic name" value="3-(2-aminoquinazolin-6-yl)-4-methyl-1-[3-(trifluoromethyl)phenyl]pyridin-2(1H)-one"/>
</dbReference>
<dbReference type="DrugBank" id="DB03365">
    <property type="generic name" value="4-[3-Hydroxyanilino]-6,7-Dimethoxyquinazoline"/>
</dbReference>
<dbReference type="DrugBank" id="DB06938">
    <property type="generic name" value="4-[[2-[[4-chloro-3-(trifluoromethyl)phenyl]amino]-3H-benzimidazol-5-yl]oxy]-N-methyl-pyridine-2-carboxamide"/>
</dbReference>
<dbReference type="DrugBank" id="DB07326">
    <property type="generic name" value="6-chloro-N-pyrimidin-5-yl-3-{[3-(trifluoromethyl)phenyl]amino}-1,2-benzisoxazole-7-carboxamide"/>
</dbReference>
<dbReference type="DrugBank" id="DB17191">
    <property type="generic name" value="Altiratinib"/>
</dbReference>
<dbReference type="DrugBank" id="DB06626">
    <property type="generic name" value="Axitinib"/>
</dbReference>
<dbReference type="DrugBank" id="DB11665">
    <property type="generic name" value="BMS-690514"/>
</dbReference>
<dbReference type="DrugBank" id="DB11958">
    <property type="generic name" value="Brivanib"/>
</dbReference>
<dbReference type="DrugBank" id="DB08875">
    <property type="generic name" value="Cabozantinib"/>
</dbReference>
<dbReference type="DrugBank" id="DB04849">
    <property type="generic name" value="Cediranib"/>
</dbReference>
<dbReference type="DrugBank" id="DB12962">
    <property type="generic name" value="CP-547632"/>
</dbReference>
<dbReference type="DrugBank" id="DB05198">
    <property type="generic name" value="CYC116"/>
</dbReference>
<dbReference type="DrugBank" id="DB12147">
    <property type="generic name" value="Erdafitinib"/>
</dbReference>
<dbReference type="DrugBank" id="DB11741">
    <property type="generic name" value="Famitinib"/>
</dbReference>
<dbReference type="DrugBank" id="DB12307">
    <property type="generic name" value="Foretinib"/>
</dbReference>
<dbReference type="DrugBank" id="DB12010">
    <property type="generic name" value="Fostamatinib"/>
</dbReference>
<dbReference type="DrugBank" id="DB11679">
    <property type="generic name" value="Fruquintinib"/>
</dbReference>
<dbReference type="DrugBank" id="DB11977">
    <property type="generic name" value="Golvatinib"/>
</dbReference>
<dbReference type="DrugBank" id="DB06101">
    <property type="generic name" value="IMC-1C11"/>
</dbReference>
<dbReference type="DrugBank" id="DB09078">
    <property type="generic name" value="Lenvatinib"/>
</dbReference>
<dbReference type="DrugBank" id="DB06080">
    <property type="generic name" value="Linifanib"/>
</dbReference>
<dbReference type="DrugBank" id="DB11845">
    <property type="generic name" value="Lucitanib"/>
</dbReference>
<dbReference type="DrugBank" id="DB06595">
    <property type="generic name" value="Midostaurin"/>
</dbReference>
<dbReference type="DrugBank" id="DB05575">
    <property type="generic name" value="Motesanib"/>
</dbReference>
<dbReference type="DrugBank" id="DB07537">
    <property type="generic name" value="N'-(6-aminopyridin-3-yl)-N-(2-cyclopentylethyl)-4-methyl-benzene-1,3-dicarboxamide"/>
</dbReference>
<dbReference type="DrugBank" id="DB07288">
    <property type="generic name" value="N-(4-chlorophenyl)-2-[(pyridin-4-ylmethyl)amino]benzamide"/>
</dbReference>
<dbReference type="DrugBank" id="DB07183">
    <property type="generic name" value="N-(4-phenoxyphenyl)-2-[(pyridin-4-ylmethyl)amino]nicotinamide"/>
</dbReference>
<dbReference type="DrugBank" id="DB07333">
    <property type="generic name" value="N-(CYCLOPROPYLMETHYL)-4-(METHYLOXY)-3-({5-[3-(3-PYRIDINYL)PHENYL]-1,3-OXAZOL-2-YL}AMINO)BENZENESULFONAMIDE"/>
</dbReference>
<dbReference type="DrugBank" id="DB07334">
    <property type="generic name" value="N-[5-(ETHYLSULFONYL)-2-METHOXYPHENYL]-5-[3-(2-PYRIDINYL)PHENYL]-1,3-OXAZOL-2-AMINE"/>
</dbReference>
<dbReference type="DrugBank" id="DB07274">
    <property type="generic name" value="N-cyclopropyl-6-[(6,7-dimethoxyquinolin-4-yl)oxy]naphthalene-1-carboxamide"/>
</dbReference>
<dbReference type="DrugBank" id="DB11828">
    <property type="generic name" value="Neratinib"/>
</dbReference>
<dbReference type="DrugBank" id="DB09079">
    <property type="generic name" value="Nintedanib"/>
</dbReference>
<dbReference type="DrugBank" id="DB08519">
    <property type="generic name" value="N~4~-(3-methyl-1H-indazol-6-yl)-N~2~-(3,4,5-trimethoxyphenyl)pyrimidine-2,4-diamine"/>
</dbReference>
<dbReference type="DrugBank" id="DB08042">
    <property type="generic name" value="N~4~-methyl-N~4~-(3-methyl-1H-indazol-6-yl)-N~2~-(3,4,5-trimethoxyphenyl)pyrimidine-2,4-diamine"/>
</dbReference>
<dbReference type="DrugBank" id="DB16265">
    <property type="generic name" value="Olinvacimab"/>
</dbReference>
<dbReference type="DrugBank" id="DB12072">
    <property type="generic name" value="Orantinib"/>
</dbReference>
<dbReference type="DrugBank" id="DB05913">
    <property type="generic name" value="OSI-930"/>
</dbReference>
<dbReference type="DrugBank" id="DB06589">
    <property type="generic name" value="Pazopanib"/>
</dbReference>
<dbReference type="DrugBank" id="DB05931">
    <property type="generic name" value="Pegdinetanib"/>
</dbReference>
<dbReference type="DrugBank" id="DB06999">
    <property type="generic name" value="PLX-4720"/>
</dbReference>
<dbReference type="DrugBank" id="DB08901">
    <property type="generic name" value="Ponatinib"/>
</dbReference>
<dbReference type="DrugBank" id="DB08052">
    <property type="generic name" value="PP-121"/>
</dbReference>
<dbReference type="DrugBank" id="DB15822">
    <property type="generic name" value="Pralsetinib"/>
</dbReference>
<dbReference type="DrugBank" id="DB05984">
    <property type="generic name" value="RAF-265"/>
</dbReference>
<dbReference type="DrugBank" id="DB05578">
    <property type="generic name" value="Ramucirumab"/>
</dbReference>
<dbReference type="DrugBank" id="DB08896">
    <property type="generic name" value="Regorafenib"/>
</dbReference>
<dbReference type="DrugBank" id="DB14840">
    <property type="generic name" value="Ripretinib"/>
</dbReference>
<dbReference type="DrugBank" id="DB06436">
    <property type="generic name" value="Semaxanib"/>
</dbReference>
<dbReference type="DrugBank" id="DB15036">
    <property type="generic name" value="Sitravatinib"/>
</dbReference>
<dbReference type="DrugBank" id="DB00398">
    <property type="generic name" value="Sorafenib"/>
</dbReference>
<dbReference type="DrugBank" id="DB08009">
    <property type="generic name" value="SU-11652"/>
</dbReference>
<dbReference type="DrugBank" id="DB01268">
    <property type="generic name" value="Sunitinib"/>
</dbReference>
<dbReference type="DrugBank" id="DB15106">
    <property type="generic name" value="Surufatinib"/>
</dbReference>
<dbReference type="DrugBank" id="DB13093">
    <property type="generic name" value="TAK-593"/>
</dbReference>
<dbReference type="DrugBank" id="DB15393">
    <property type="generic name" value="Telatinib"/>
</dbReference>
<dbReference type="DrugBank" id="DB05075">
    <property type="generic name" value="TG-100801"/>
</dbReference>
<dbReference type="DrugBank" id="DB11800">
    <property type="generic name" value="Tivozanib"/>
</dbReference>
<dbReference type="DrugBank" id="DB05294">
    <property type="generic name" value="Vandetanib"/>
</dbReference>
<dbReference type="DrugBank" id="DB04879">
    <property type="generic name" value="Vatalanib"/>
</dbReference>
<dbReference type="DrugBank" id="DB17061">
    <property type="generic name" value="VEGFR 2 Kinase inhibitor I"/>
</dbReference>
<dbReference type="DrugBank" id="DB05146">
    <property type="generic name" value="XL820"/>
</dbReference>
<dbReference type="DrugBank" id="DB05014">
    <property type="generic name" value="XL999"/>
</dbReference>
<dbReference type="DrugCentral" id="P35968"/>
<dbReference type="GuidetoPHARMACOLOGY" id="1813"/>
<dbReference type="CarbonylDB" id="P35968"/>
<dbReference type="GlyCosmos" id="P35968">
    <property type="glycosylation" value="19 sites, 1 glycan"/>
</dbReference>
<dbReference type="GlyGen" id="P35968">
    <property type="glycosylation" value="22 sites, 6 N-linked glycans (2 sites), 2 O-linked glycans (3 sites)"/>
</dbReference>
<dbReference type="iPTMnet" id="P35968"/>
<dbReference type="PhosphoSitePlus" id="P35968"/>
<dbReference type="BioMuta" id="KDR"/>
<dbReference type="DMDM" id="9087218"/>
<dbReference type="CPTAC" id="CPTAC-3120"/>
<dbReference type="jPOST" id="P35968"/>
<dbReference type="MassIVE" id="P35968"/>
<dbReference type="PaxDb" id="9606-ENSP00000263923"/>
<dbReference type="PeptideAtlas" id="P35968"/>
<dbReference type="ProteomicsDB" id="55169">
    <molecule id="P35968-1"/>
</dbReference>
<dbReference type="ProteomicsDB" id="55170">
    <molecule id="P35968-2"/>
</dbReference>
<dbReference type="ProteomicsDB" id="55171">
    <molecule id="P35968-3"/>
</dbReference>
<dbReference type="ABCD" id="P35968">
    <property type="antibodies" value="76 sequenced antibodies"/>
</dbReference>
<dbReference type="Antibodypedia" id="3413">
    <property type="antibodies" value="3852 antibodies from 55 providers"/>
</dbReference>
<dbReference type="DNASU" id="3791"/>
<dbReference type="Ensembl" id="ENST00000263923.5">
    <molecule id="P35968-1"/>
    <property type="protein sequence ID" value="ENSP00000263923.4"/>
    <property type="gene ID" value="ENSG00000128052.10"/>
</dbReference>
<dbReference type="GeneID" id="3791"/>
<dbReference type="KEGG" id="hsa:3791"/>
<dbReference type="MANE-Select" id="ENST00000263923.5">
    <property type="protein sequence ID" value="ENSP00000263923.4"/>
    <property type="RefSeq nucleotide sequence ID" value="NM_002253.4"/>
    <property type="RefSeq protein sequence ID" value="NP_002244.1"/>
</dbReference>
<dbReference type="UCSC" id="uc003has.4">
    <molecule id="P35968-1"/>
    <property type="organism name" value="human"/>
</dbReference>
<dbReference type="AGR" id="HGNC:6307"/>
<dbReference type="CTD" id="3791"/>
<dbReference type="DisGeNET" id="3791"/>
<dbReference type="GeneCards" id="KDR"/>
<dbReference type="HGNC" id="HGNC:6307">
    <property type="gene designation" value="KDR"/>
</dbReference>
<dbReference type="HPA" id="ENSG00000128052">
    <property type="expression patterns" value="Low tissue specificity"/>
</dbReference>
<dbReference type="MalaCards" id="KDR"/>
<dbReference type="MIM" id="191306">
    <property type="type" value="gene"/>
</dbReference>
<dbReference type="MIM" id="602089">
    <property type="type" value="phenotype"/>
</dbReference>
<dbReference type="neXtProt" id="NX_P35968"/>
<dbReference type="OpenTargets" id="ENSG00000128052"/>
<dbReference type="Orphanet" id="3303">
    <property type="disease" value="Tetralogy of Fallot"/>
</dbReference>
<dbReference type="PharmGKB" id="PA30086"/>
<dbReference type="VEuPathDB" id="HostDB:ENSG00000128052"/>
<dbReference type="eggNOG" id="KOG0200">
    <property type="taxonomic scope" value="Eukaryota"/>
</dbReference>
<dbReference type="GeneTree" id="ENSGT00940000156710"/>
<dbReference type="HOGENOM" id="CLU_000288_49_4_1"/>
<dbReference type="InParanoid" id="P35968"/>
<dbReference type="OMA" id="FYRDTDM"/>
<dbReference type="OrthoDB" id="9873386at2759"/>
<dbReference type="PAN-GO" id="P35968">
    <property type="GO annotations" value="11 GO annotations based on evolutionary models"/>
</dbReference>
<dbReference type="PhylomeDB" id="P35968"/>
<dbReference type="TreeFam" id="TF325768"/>
<dbReference type="BRENDA" id="2.7.10.1">
    <property type="organism ID" value="2681"/>
</dbReference>
<dbReference type="PathwayCommons" id="P35968"/>
<dbReference type="Reactome" id="R-HSA-194306">
    <property type="pathway name" value="Neurophilin interactions with VEGF and VEGFR"/>
</dbReference>
<dbReference type="Reactome" id="R-HSA-195399">
    <property type="pathway name" value="VEGF binds to VEGFR leading to receptor dimerization"/>
</dbReference>
<dbReference type="Reactome" id="R-HSA-216083">
    <property type="pathway name" value="Integrin cell surface interactions"/>
</dbReference>
<dbReference type="Reactome" id="R-HSA-4420097">
    <property type="pathway name" value="VEGFA-VEGFR2 Pathway"/>
</dbReference>
<dbReference type="Reactome" id="R-HSA-5218921">
    <property type="pathway name" value="VEGFR2 mediated cell proliferation"/>
</dbReference>
<dbReference type="Reactome" id="R-HSA-9673768">
    <property type="pathway name" value="Signaling by membrane-tethered fusions of PDGFRA or PDGFRB"/>
</dbReference>
<dbReference type="Reactome" id="R-HSA-9856530">
    <property type="pathway name" value="High laminar flow shear stress activates signaling by PIEZO1 and PECAM1:CDH5:KDR in endothelial cells"/>
</dbReference>
<dbReference type="SignaLink" id="P35968"/>
<dbReference type="SIGNOR" id="P35968"/>
<dbReference type="BioGRID-ORCS" id="3791">
    <property type="hits" value="9 hits in 1200 CRISPR screens"/>
</dbReference>
<dbReference type="EvolutionaryTrace" id="P35968"/>
<dbReference type="GeneWiki" id="Kinase_insert_domain_receptor"/>
<dbReference type="GenomeRNAi" id="3791"/>
<dbReference type="Pharos" id="P35968">
    <property type="development level" value="Tclin"/>
</dbReference>
<dbReference type="PRO" id="PR:P35968"/>
<dbReference type="Proteomes" id="UP000005640">
    <property type="component" value="Chromosome 4"/>
</dbReference>
<dbReference type="RNAct" id="P35968">
    <property type="molecule type" value="protein"/>
</dbReference>
<dbReference type="Bgee" id="ENSG00000128052">
    <property type="expression patterns" value="Expressed in germinal epithelium of ovary and 190 other cell types or tissues"/>
</dbReference>
<dbReference type="GO" id="GO:0070161">
    <property type="term" value="C:anchoring junction"/>
    <property type="evidence" value="ECO:0007669"/>
    <property type="project" value="UniProtKB-SubCell"/>
</dbReference>
<dbReference type="GO" id="GO:0030054">
    <property type="term" value="C:cell junction"/>
    <property type="evidence" value="ECO:0000250"/>
    <property type="project" value="UniProtKB"/>
</dbReference>
<dbReference type="GO" id="GO:0005769">
    <property type="term" value="C:early endosome"/>
    <property type="evidence" value="ECO:0000250"/>
    <property type="project" value="BHF-UCL"/>
</dbReference>
<dbReference type="GO" id="GO:0005783">
    <property type="term" value="C:endoplasmic reticulum"/>
    <property type="evidence" value="ECO:0000314"/>
    <property type="project" value="UniProtKB"/>
</dbReference>
<dbReference type="GO" id="GO:0005768">
    <property type="term" value="C:endosome"/>
    <property type="evidence" value="ECO:0000314"/>
    <property type="project" value="UniProtKB"/>
</dbReference>
<dbReference type="GO" id="GO:0009897">
    <property type="term" value="C:external side of plasma membrane"/>
    <property type="evidence" value="ECO:0007669"/>
    <property type="project" value="Ensembl"/>
</dbReference>
<dbReference type="GO" id="GO:0005576">
    <property type="term" value="C:extracellular region"/>
    <property type="evidence" value="ECO:0007669"/>
    <property type="project" value="UniProtKB-SubCell"/>
</dbReference>
<dbReference type="GO" id="GO:0005794">
    <property type="term" value="C:Golgi apparatus"/>
    <property type="evidence" value="ECO:0000314"/>
    <property type="project" value="UniProtKB"/>
</dbReference>
<dbReference type="GO" id="GO:0045121">
    <property type="term" value="C:membrane raft"/>
    <property type="evidence" value="ECO:0000314"/>
    <property type="project" value="UniProtKB"/>
</dbReference>
<dbReference type="GO" id="GO:0005634">
    <property type="term" value="C:nucleus"/>
    <property type="evidence" value="ECO:0007669"/>
    <property type="project" value="UniProtKB-SubCell"/>
</dbReference>
<dbReference type="GO" id="GO:0005886">
    <property type="term" value="C:plasma membrane"/>
    <property type="evidence" value="ECO:0000314"/>
    <property type="project" value="UniProtKB"/>
</dbReference>
<dbReference type="GO" id="GO:0043235">
    <property type="term" value="C:receptor complex"/>
    <property type="evidence" value="ECO:0000318"/>
    <property type="project" value="GO_Central"/>
</dbReference>
<dbReference type="GO" id="GO:0097443">
    <property type="term" value="C:sorting endosome"/>
    <property type="evidence" value="ECO:0000250"/>
    <property type="project" value="BHF-UCL"/>
</dbReference>
<dbReference type="GO" id="GO:0005524">
    <property type="term" value="F:ATP binding"/>
    <property type="evidence" value="ECO:0007669"/>
    <property type="project" value="UniProtKB-KW"/>
</dbReference>
<dbReference type="GO" id="GO:0045296">
    <property type="term" value="F:cadherin binding"/>
    <property type="evidence" value="ECO:0000353"/>
    <property type="project" value="UniProtKB"/>
</dbReference>
<dbReference type="GO" id="GO:0015026">
    <property type="term" value="F:coreceptor activity"/>
    <property type="evidence" value="ECO:0007669"/>
    <property type="project" value="Ensembl"/>
</dbReference>
<dbReference type="GO" id="GO:0019838">
    <property type="term" value="F:growth factor binding"/>
    <property type="evidence" value="ECO:0000353"/>
    <property type="project" value="BHF-UCL"/>
</dbReference>
<dbReference type="GO" id="GO:0051879">
    <property type="term" value="F:Hsp90 protein binding"/>
    <property type="evidence" value="ECO:0000304"/>
    <property type="project" value="BHF-UCL"/>
</dbReference>
<dbReference type="GO" id="GO:0042802">
    <property type="term" value="F:identical protein binding"/>
    <property type="evidence" value="ECO:0000353"/>
    <property type="project" value="IntAct"/>
</dbReference>
<dbReference type="GO" id="GO:0005178">
    <property type="term" value="F:integrin binding"/>
    <property type="evidence" value="ECO:0000353"/>
    <property type="project" value="BHF-UCL"/>
</dbReference>
<dbReference type="GO" id="GO:0004713">
    <property type="term" value="F:protein tyrosine kinase activity"/>
    <property type="evidence" value="ECO:0000314"/>
    <property type="project" value="UniProtKB"/>
</dbReference>
<dbReference type="GO" id="GO:0004714">
    <property type="term" value="F:transmembrane receptor protein tyrosine kinase activity"/>
    <property type="evidence" value="ECO:0000304"/>
    <property type="project" value="BHF-UCL"/>
</dbReference>
<dbReference type="GO" id="GO:0038085">
    <property type="term" value="F:vascular endothelial growth factor binding"/>
    <property type="evidence" value="ECO:0000353"/>
    <property type="project" value="BHF-UCL"/>
</dbReference>
<dbReference type="GO" id="GO:0005021">
    <property type="term" value="F:vascular endothelial growth factor receptor activity"/>
    <property type="evidence" value="ECO:0000314"/>
    <property type="project" value="UniProtKB"/>
</dbReference>
<dbReference type="GO" id="GO:0001525">
    <property type="term" value="P:angiogenesis"/>
    <property type="evidence" value="ECO:0000318"/>
    <property type="project" value="GO_Central"/>
</dbReference>
<dbReference type="GO" id="GO:0060837">
    <property type="term" value="P:blood vessel endothelial cell differentiation"/>
    <property type="evidence" value="ECO:0007669"/>
    <property type="project" value="Ensembl"/>
</dbReference>
<dbReference type="GO" id="GO:0001569">
    <property type="term" value="P:branching involved in blood vessel morphogenesis"/>
    <property type="evidence" value="ECO:0000315"/>
    <property type="project" value="BHF-UCL"/>
</dbReference>
<dbReference type="GO" id="GO:0055074">
    <property type="term" value="P:calcium ion homeostasis"/>
    <property type="evidence" value="ECO:0007669"/>
    <property type="project" value="Ensembl"/>
</dbReference>
<dbReference type="GO" id="GO:0045165">
    <property type="term" value="P:cell fate commitment"/>
    <property type="evidence" value="ECO:0007669"/>
    <property type="project" value="Ensembl"/>
</dbReference>
<dbReference type="GO" id="GO:0016477">
    <property type="term" value="P:cell migration"/>
    <property type="evidence" value="ECO:0000318"/>
    <property type="project" value="GO_Central"/>
</dbReference>
<dbReference type="GO" id="GO:0002042">
    <property type="term" value="P:cell migration involved in sprouting angiogenesis"/>
    <property type="evidence" value="ECO:0007669"/>
    <property type="project" value="Ensembl"/>
</dbReference>
<dbReference type="GO" id="GO:0007169">
    <property type="term" value="P:cell surface receptor protein tyrosine kinase signaling pathway"/>
    <property type="evidence" value="ECO:0000318"/>
    <property type="project" value="GO_Central"/>
</dbReference>
<dbReference type="GO" id="GO:1904881">
    <property type="term" value="P:cellular response to hydrogen sulfide"/>
    <property type="evidence" value="ECO:0000314"/>
    <property type="project" value="BHF-UCL"/>
</dbReference>
<dbReference type="GO" id="GO:0035924">
    <property type="term" value="P:cellular response to vascular endothelial growth factor stimulus"/>
    <property type="evidence" value="ECO:0000314"/>
    <property type="project" value="UniProtKB"/>
</dbReference>
<dbReference type="GO" id="GO:0035162">
    <property type="term" value="P:embryonic hemopoiesis"/>
    <property type="evidence" value="ECO:0000250"/>
    <property type="project" value="UniProtKB"/>
</dbReference>
<dbReference type="GO" id="GO:0003157">
    <property type="term" value="P:endocardium development"/>
    <property type="evidence" value="ECO:0007669"/>
    <property type="project" value="Ensembl"/>
</dbReference>
<dbReference type="GO" id="GO:0045446">
    <property type="term" value="P:endothelial cell differentiation"/>
    <property type="evidence" value="ECO:0000318"/>
    <property type="project" value="GO_Central"/>
</dbReference>
<dbReference type="GO" id="GO:0003158">
    <property type="term" value="P:endothelium development"/>
    <property type="evidence" value="ECO:0000250"/>
    <property type="project" value="UniProtKB"/>
</dbReference>
<dbReference type="GO" id="GO:0002070">
    <property type="term" value="P:epithelial cell maturation"/>
    <property type="evidence" value="ECO:0007669"/>
    <property type="project" value="Ensembl"/>
</dbReference>
<dbReference type="GO" id="GO:0050673">
    <property type="term" value="P:epithelial cell proliferation"/>
    <property type="evidence" value="ECO:0007669"/>
    <property type="project" value="Ensembl"/>
</dbReference>
<dbReference type="GO" id="GO:0048286">
    <property type="term" value="P:lung alveolus development"/>
    <property type="evidence" value="ECO:0007669"/>
    <property type="project" value="Ensembl"/>
</dbReference>
<dbReference type="GO" id="GO:0001945">
    <property type="term" value="P:lymph vessel development"/>
    <property type="evidence" value="ECO:0007669"/>
    <property type="project" value="Ensembl"/>
</dbReference>
<dbReference type="GO" id="GO:0010463">
    <property type="term" value="P:mesenchymal cell proliferation"/>
    <property type="evidence" value="ECO:0007669"/>
    <property type="project" value="Ensembl"/>
</dbReference>
<dbReference type="GO" id="GO:2000352">
    <property type="term" value="P:negative regulation of endothelial cell apoptotic process"/>
    <property type="evidence" value="ECO:0000314"/>
    <property type="project" value="UniProtKB"/>
</dbReference>
<dbReference type="GO" id="GO:0010629">
    <property type="term" value="P:negative regulation of gene expression"/>
    <property type="evidence" value="ECO:0000314"/>
    <property type="project" value="BHF-UCL"/>
</dbReference>
<dbReference type="GO" id="GO:0043524">
    <property type="term" value="P:negative regulation of neuron apoptotic process"/>
    <property type="evidence" value="ECO:0007669"/>
    <property type="project" value="Ensembl"/>
</dbReference>
<dbReference type="GO" id="GO:0001541">
    <property type="term" value="P:ovarian follicle development"/>
    <property type="evidence" value="ECO:0007669"/>
    <property type="project" value="Ensembl"/>
</dbReference>
<dbReference type="GO" id="GO:0018108">
    <property type="term" value="P:peptidyl-tyrosine phosphorylation"/>
    <property type="evidence" value="ECO:0000314"/>
    <property type="project" value="UniProtKB"/>
</dbReference>
<dbReference type="GO" id="GO:0045766">
    <property type="term" value="P:positive regulation of angiogenesis"/>
    <property type="evidence" value="ECO:0000314"/>
    <property type="project" value="UniProt"/>
</dbReference>
<dbReference type="GO" id="GO:0043536">
    <property type="term" value="P:positive regulation of blood vessel endothelial cell migration"/>
    <property type="evidence" value="ECO:0000315"/>
    <property type="project" value="BHF-UCL"/>
</dbReference>
<dbReference type="GO" id="GO:0030513">
    <property type="term" value="P:positive regulation of BMP signaling pathway"/>
    <property type="evidence" value="ECO:0007669"/>
    <property type="project" value="Ensembl"/>
</dbReference>
<dbReference type="GO" id="GO:0030335">
    <property type="term" value="P:positive regulation of cell migration"/>
    <property type="evidence" value="ECO:0000314"/>
    <property type="project" value="BHF-UCL"/>
</dbReference>
<dbReference type="GO" id="GO:0090050">
    <property type="term" value="P:positive regulation of cell migration involved in sprouting angiogenesis"/>
    <property type="evidence" value="ECO:0000315"/>
    <property type="project" value="BHF-UCL"/>
</dbReference>
<dbReference type="GO" id="GO:0008284">
    <property type="term" value="P:positive regulation of cell population proliferation"/>
    <property type="evidence" value="ECO:0000314"/>
    <property type="project" value="BHF-UCL"/>
</dbReference>
<dbReference type="GO" id="GO:2001028">
    <property type="term" value="P:positive regulation of endothelial cell chemotaxis"/>
    <property type="evidence" value="ECO:0000314"/>
    <property type="project" value="BHF-UCL"/>
</dbReference>
<dbReference type="GO" id="GO:0010595">
    <property type="term" value="P:positive regulation of endothelial cell migration"/>
    <property type="evidence" value="ECO:0000315"/>
    <property type="project" value="BHF-UCL"/>
</dbReference>
<dbReference type="GO" id="GO:0001938">
    <property type="term" value="P:positive regulation of endothelial cell proliferation"/>
    <property type="evidence" value="ECO:0000315"/>
    <property type="project" value="UniProtKB"/>
</dbReference>
<dbReference type="GO" id="GO:0070374">
    <property type="term" value="P:positive regulation of ERK1 and ERK2 cascade"/>
    <property type="evidence" value="ECO:0000315"/>
    <property type="project" value="BHF-UCL"/>
</dbReference>
<dbReference type="GO" id="GO:0051894">
    <property type="term" value="P:positive regulation of focal adhesion assembly"/>
    <property type="evidence" value="ECO:0000314"/>
    <property type="project" value="BHF-UCL"/>
</dbReference>
<dbReference type="GO" id="GO:0016239">
    <property type="term" value="P:positive regulation of macroautophagy"/>
    <property type="evidence" value="ECO:0000316"/>
    <property type="project" value="MGI"/>
</dbReference>
<dbReference type="GO" id="GO:0043410">
    <property type="term" value="P:positive regulation of MAPK cascade"/>
    <property type="evidence" value="ECO:0000314"/>
    <property type="project" value="UniProtKB"/>
</dbReference>
<dbReference type="GO" id="GO:0002053">
    <property type="term" value="P:positive regulation of mesenchymal cell proliferation"/>
    <property type="evidence" value="ECO:0007669"/>
    <property type="project" value="Ensembl"/>
</dbReference>
<dbReference type="GO" id="GO:0051901">
    <property type="term" value="P:positive regulation of mitochondrial depolarization"/>
    <property type="evidence" value="ECO:0000316"/>
    <property type="project" value="MGI"/>
</dbReference>
<dbReference type="GO" id="GO:0090141">
    <property type="term" value="P:positive regulation of mitochondrial fission"/>
    <property type="evidence" value="ECO:0000316"/>
    <property type="project" value="MGI"/>
</dbReference>
<dbReference type="GO" id="GO:0141150">
    <property type="term" value="P:positive regulation of nitric oxide-cGMP mediated signal transduction"/>
    <property type="evidence" value="ECO:0000314"/>
    <property type="project" value="UniProtKB"/>
</dbReference>
<dbReference type="GO" id="GO:0051897">
    <property type="term" value="P:positive regulation of phosphatidylinositol 3-kinase/protein kinase B signal transduction"/>
    <property type="evidence" value="ECO:0000314"/>
    <property type="project" value="UniProtKB"/>
</dbReference>
<dbReference type="GO" id="GO:0050927">
    <property type="term" value="P:positive regulation of positive chemotaxis"/>
    <property type="evidence" value="ECO:0000314"/>
    <property type="project" value="BHF-UCL"/>
</dbReference>
<dbReference type="GO" id="GO:0001934">
    <property type="term" value="P:positive regulation of protein phosphorylation"/>
    <property type="evidence" value="ECO:0000314"/>
    <property type="project" value="UniProtKB"/>
</dbReference>
<dbReference type="GO" id="GO:2000648">
    <property type="term" value="P:positive regulation of stem cell proliferation"/>
    <property type="evidence" value="ECO:0007669"/>
    <property type="project" value="Ensembl"/>
</dbReference>
<dbReference type="GO" id="GO:2001214">
    <property type="term" value="P:positive regulation of vasculogenesis"/>
    <property type="evidence" value="ECO:0000250"/>
    <property type="project" value="UniProtKB"/>
</dbReference>
<dbReference type="GO" id="GO:0048597">
    <property type="term" value="P:post-embryonic camera-type eye morphogenesis"/>
    <property type="evidence" value="ECO:0007669"/>
    <property type="project" value="Ensembl"/>
</dbReference>
<dbReference type="GO" id="GO:0046777">
    <property type="term" value="P:protein autophosphorylation"/>
    <property type="evidence" value="ECO:0000314"/>
    <property type="project" value="UniProtKB"/>
</dbReference>
<dbReference type="GO" id="GO:1903010">
    <property type="term" value="P:regulation of bone development"/>
    <property type="evidence" value="ECO:0007669"/>
    <property type="project" value="Ensembl"/>
</dbReference>
<dbReference type="GO" id="GO:0008360">
    <property type="term" value="P:regulation of cell shape"/>
    <property type="evidence" value="ECO:0000314"/>
    <property type="project" value="BHF-UCL"/>
</dbReference>
<dbReference type="GO" id="GO:1901532">
    <property type="term" value="P:regulation of hematopoietic progenitor cell differentiation"/>
    <property type="evidence" value="ECO:0007669"/>
    <property type="project" value="Ensembl"/>
</dbReference>
<dbReference type="GO" id="GO:0043408">
    <property type="term" value="P:regulation of MAPK cascade"/>
    <property type="evidence" value="ECO:0000318"/>
    <property type="project" value="GO_Central"/>
</dbReference>
<dbReference type="GO" id="GO:0071526">
    <property type="term" value="P:semaphorin-plexin signaling pathway"/>
    <property type="evidence" value="ECO:0007669"/>
    <property type="project" value="Ensembl"/>
</dbReference>
<dbReference type="GO" id="GO:0072089">
    <property type="term" value="P:stem cell proliferation"/>
    <property type="evidence" value="ECO:0007669"/>
    <property type="project" value="Ensembl"/>
</dbReference>
<dbReference type="GO" id="GO:0043129">
    <property type="term" value="P:surfactant homeostasis"/>
    <property type="evidence" value="ECO:0007669"/>
    <property type="project" value="Ensembl"/>
</dbReference>
<dbReference type="GO" id="GO:0048010">
    <property type="term" value="P:vascular endothelial growth factor receptor signaling pathway"/>
    <property type="evidence" value="ECO:0000314"/>
    <property type="project" value="UniProtKB"/>
</dbReference>
<dbReference type="GO" id="GO:0036324">
    <property type="term" value="P:vascular endothelial growth factor receptor-2 signaling pathway"/>
    <property type="evidence" value="ECO:0000315"/>
    <property type="project" value="UniProtKB"/>
</dbReference>
<dbReference type="GO" id="GO:0038084">
    <property type="term" value="P:vascular endothelial growth factor signaling pathway"/>
    <property type="evidence" value="ECO:0000314"/>
    <property type="project" value="BHF-UCL"/>
</dbReference>
<dbReference type="GO" id="GO:0061042">
    <property type="term" value="P:vascular wound healing"/>
    <property type="evidence" value="ECO:0000315"/>
    <property type="project" value="BHF-UCL"/>
</dbReference>
<dbReference type="GO" id="GO:0001570">
    <property type="term" value="P:vasculogenesis"/>
    <property type="evidence" value="ECO:0000250"/>
    <property type="project" value="UniProtKB"/>
</dbReference>
<dbReference type="CDD" id="cd00096">
    <property type="entry name" value="Ig"/>
    <property type="match status" value="1"/>
</dbReference>
<dbReference type="CDD" id="cd05862">
    <property type="entry name" value="IgI_VEGFR"/>
    <property type="match status" value="1"/>
</dbReference>
<dbReference type="CDD" id="cd05864">
    <property type="entry name" value="IgI_VEGFR-2"/>
    <property type="match status" value="1"/>
</dbReference>
<dbReference type="CDD" id="cd05103">
    <property type="entry name" value="PTKc_VEGFR2"/>
    <property type="match status" value="1"/>
</dbReference>
<dbReference type="FunFam" id="1.10.510.10:FF:000077">
    <property type="entry name" value="Vascular endothelial growth factor receptor 2"/>
    <property type="match status" value="1"/>
</dbReference>
<dbReference type="FunFam" id="2.60.40.10:FF:000532">
    <property type="entry name" value="Vascular endothelial growth factor receptor 2"/>
    <property type="match status" value="1"/>
</dbReference>
<dbReference type="FunFam" id="2.60.40.10:FF:000596">
    <property type="entry name" value="Vascular endothelial growth factor receptor 2"/>
    <property type="match status" value="1"/>
</dbReference>
<dbReference type="FunFam" id="2.60.40.10:FF:000669">
    <property type="entry name" value="Vascular endothelial growth factor receptor 2"/>
    <property type="match status" value="1"/>
</dbReference>
<dbReference type="FunFam" id="2.60.40.10:FF:000767">
    <property type="entry name" value="Vascular endothelial growth factor receptor 2"/>
    <property type="match status" value="1"/>
</dbReference>
<dbReference type="FunFam" id="2.60.40.10:FF:000880">
    <property type="entry name" value="Vascular endothelial growth factor receptor 2"/>
    <property type="match status" value="1"/>
</dbReference>
<dbReference type="FunFam" id="3.30.200.20:FF:000041">
    <property type="entry name" value="Vascular endothelial growth factor receptor 2"/>
    <property type="match status" value="1"/>
</dbReference>
<dbReference type="FunFam" id="2.60.40.10:FF:000143">
    <property type="entry name" value="Vascular endothelial growth factor receptor 3"/>
    <property type="match status" value="1"/>
</dbReference>
<dbReference type="FunFam" id="2.60.40.10:FF:000247">
    <property type="entry name" value="Vascular endothelial growth factor receptor 3"/>
    <property type="match status" value="1"/>
</dbReference>
<dbReference type="Gene3D" id="2.60.40.10">
    <property type="entry name" value="Immunoglobulins"/>
    <property type="match status" value="7"/>
</dbReference>
<dbReference type="Gene3D" id="3.30.200.20">
    <property type="entry name" value="Phosphorylase Kinase, domain 1"/>
    <property type="match status" value="1"/>
</dbReference>
<dbReference type="Gene3D" id="1.10.510.10">
    <property type="entry name" value="Transferase(Phosphotransferase) domain 1"/>
    <property type="match status" value="1"/>
</dbReference>
<dbReference type="InterPro" id="IPR007110">
    <property type="entry name" value="Ig-like_dom"/>
</dbReference>
<dbReference type="InterPro" id="IPR036179">
    <property type="entry name" value="Ig-like_dom_sf"/>
</dbReference>
<dbReference type="InterPro" id="IPR013783">
    <property type="entry name" value="Ig-like_fold"/>
</dbReference>
<dbReference type="InterPro" id="IPR013098">
    <property type="entry name" value="Ig_I-set"/>
</dbReference>
<dbReference type="InterPro" id="IPR003599">
    <property type="entry name" value="Ig_sub"/>
</dbReference>
<dbReference type="InterPro" id="IPR003598">
    <property type="entry name" value="Ig_sub2"/>
</dbReference>
<dbReference type="InterPro" id="IPR013151">
    <property type="entry name" value="Immunoglobulin_dom"/>
</dbReference>
<dbReference type="InterPro" id="IPR011009">
    <property type="entry name" value="Kinase-like_dom_sf"/>
</dbReference>
<dbReference type="InterPro" id="IPR000719">
    <property type="entry name" value="Prot_kinase_dom"/>
</dbReference>
<dbReference type="InterPro" id="IPR017441">
    <property type="entry name" value="Protein_kinase_ATP_BS"/>
</dbReference>
<dbReference type="InterPro" id="IPR050122">
    <property type="entry name" value="RTK"/>
</dbReference>
<dbReference type="InterPro" id="IPR001245">
    <property type="entry name" value="Ser-Thr/Tyr_kinase_cat_dom"/>
</dbReference>
<dbReference type="InterPro" id="IPR008266">
    <property type="entry name" value="Tyr_kinase_AS"/>
</dbReference>
<dbReference type="InterPro" id="IPR020635">
    <property type="entry name" value="Tyr_kinase_cat_dom"/>
</dbReference>
<dbReference type="InterPro" id="IPR001824">
    <property type="entry name" value="Tyr_kinase_rcpt_3_CS"/>
</dbReference>
<dbReference type="InterPro" id="IPR041348">
    <property type="entry name" value="VEGFR-2_TMD"/>
</dbReference>
<dbReference type="InterPro" id="IPR055229">
    <property type="entry name" value="VEGFR1-3_5th"/>
</dbReference>
<dbReference type="InterPro" id="IPR055238">
    <property type="entry name" value="VEGFR1-3_N_Ig-like"/>
</dbReference>
<dbReference type="InterPro" id="IPR009136">
    <property type="entry name" value="VEGFR2_rcpt"/>
</dbReference>
<dbReference type="PANTHER" id="PTHR24416">
    <property type="entry name" value="TYROSINE-PROTEIN KINASE RECEPTOR"/>
    <property type="match status" value="1"/>
</dbReference>
<dbReference type="PANTHER" id="PTHR24416:SF45">
    <property type="entry name" value="VASCULAR ENDOTHELIAL GROWTH FACTOR RECEPTOR 2"/>
    <property type="match status" value="1"/>
</dbReference>
<dbReference type="Pfam" id="PF07679">
    <property type="entry name" value="I-set"/>
    <property type="match status" value="2"/>
</dbReference>
<dbReference type="Pfam" id="PF00047">
    <property type="entry name" value="ig"/>
    <property type="match status" value="1"/>
</dbReference>
<dbReference type="Pfam" id="PF13895">
    <property type="entry name" value="Ig_2"/>
    <property type="match status" value="1"/>
</dbReference>
<dbReference type="Pfam" id="PF22971">
    <property type="entry name" value="Ig_VEGFR-1-like_5th"/>
    <property type="match status" value="1"/>
</dbReference>
<dbReference type="Pfam" id="PF07714">
    <property type="entry name" value="PK_Tyr_Ser-Thr"/>
    <property type="match status" value="1"/>
</dbReference>
<dbReference type="Pfam" id="PF21339">
    <property type="entry name" value="VEGFR-1-like_Ig-like"/>
    <property type="match status" value="1"/>
</dbReference>
<dbReference type="Pfam" id="PF17988">
    <property type="entry name" value="VEGFR-2_TMD"/>
    <property type="match status" value="1"/>
</dbReference>
<dbReference type="Pfam" id="PF22854">
    <property type="entry name" value="VEGFR1-3_N_Ig-like"/>
    <property type="match status" value="1"/>
</dbReference>
<dbReference type="PIRSF" id="PIRSF000615">
    <property type="entry name" value="TyrPK_CSF1-R"/>
    <property type="match status" value="1"/>
</dbReference>
<dbReference type="PRINTS" id="PR01832">
    <property type="entry name" value="VEGFRECEPTOR"/>
</dbReference>
<dbReference type="PRINTS" id="PR01834">
    <property type="entry name" value="VEGFRECEPTR2"/>
</dbReference>
<dbReference type="SMART" id="SM00409">
    <property type="entry name" value="IG"/>
    <property type="match status" value="7"/>
</dbReference>
<dbReference type="SMART" id="SM00408">
    <property type="entry name" value="IGc2"/>
    <property type="match status" value="5"/>
</dbReference>
<dbReference type="SMART" id="SM00219">
    <property type="entry name" value="TyrKc"/>
    <property type="match status" value="1"/>
</dbReference>
<dbReference type="SUPFAM" id="SSF48726">
    <property type="entry name" value="Immunoglobulin"/>
    <property type="match status" value="6"/>
</dbReference>
<dbReference type="SUPFAM" id="SSF56112">
    <property type="entry name" value="Protein kinase-like (PK-like)"/>
    <property type="match status" value="1"/>
</dbReference>
<dbReference type="PROSITE" id="PS50835">
    <property type="entry name" value="IG_LIKE"/>
    <property type="match status" value="5"/>
</dbReference>
<dbReference type="PROSITE" id="PS00107">
    <property type="entry name" value="PROTEIN_KINASE_ATP"/>
    <property type="match status" value="1"/>
</dbReference>
<dbReference type="PROSITE" id="PS50011">
    <property type="entry name" value="PROTEIN_KINASE_DOM"/>
    <property type="match status" value="1"/>
</dbReference>
<dbReference type="PROSITE" id="PS00109">
    <property type="entry name" value="PROTEIN_KINASE_TYR"/>
    <property type="match status" value="1"/>
</dbReference>
<dbReference type="PROSITE" id="PS00240">
    <property type="entry name" value="RECEPTOR_TYR_KIN_III"/>
    <property type="match status" value="1"/>
</dbReference>
<keyword id="KW-0002">3D-structure</keyword>
<keyword id="KW-0025">Alternative splicing</keyword>
<keyword id="KW-0037">Angiogenesis</keyword>
<keyword id="KW-0067">ATP-binding</keyword>
<keyword id="KW-0965">Cell junction</keyword>
<keyword id="KW-1003">Cell membrane</keyword>
<keyword id="KW-0963">Cytoplasm</keyword>
<keyword id="KW-0968">Cytoplasmic vesicle</keyword>
<keyword id="KW-0217">Developmental protein</keyword>
<keyword id="KW-0221">Differentiation</keyword>
<keyword id="KW-1015">Disulfide bond</keyword>
<keyword id="KW-0256">Endoplasmic reticulum</keyword>
<keyword id="KW-0967">Endosome</keyword>
<keyword id="KW-0325">Glycoprotein</keyword>
<keyword id="KW-0945">Host-virus interaction</keyword>
<keyword id="KW-0393">Immunoglobulin domain</keyword>
<keyword id="KW-0418">Kinase</keyword>
<keyword id="KW-0472">Membrane</keyword>
<keyword id="KW-0547">Nucleotide-binding</keyword>
<keyword id="KW-0539">Nucleus</keyword>
<keyword id="KW-0597">Phosphoprotein</keyword>
<keyword id="KW-1267">Proteomics identification</keyword>
<keyword id="KW-0675">Receptor</keyword>
<keyword id="KW-1185">Reference proteome</keyword>
<keyword id="KW-0677">Repeat</keyword>
<keyword id="KW-0964">Secreted</keyword>
<keyword id="KW-0732">Signal</keyword>
<keyword id="KW-0808">Transferase</keyword>
<keyword id="KW-0812">Transmembrane</keyword>
<keyword id="KW-1133">Transmembrane helix</keyword>
<keyword id="KW-0829">Tyrosine-protein kinase</keyword>
<keyword id="KW-0832">Ubl conjugation</keyword>
<evidence type="ECO:0000250" key="1"/>
<evidence type="ECO:0000250" key="2">
    <source>
        <dbReference type="UniProtKB" id="P35918"/>
    </source>
</evidence>
<evidence type="ECO:0000255" key="3"/>
<evidence type="ECO:0000255" key="4">
    <source>
        <dbReference type="PROSITE-ProRule" id="PRU00114"/>
    </source>
</evidence>
<evidence type="ECO:0000255" key="5">
    <source>
        <dbReference type="PROSITE-ProRule" id="PRU00159"/>
    </source>
</evidence>
<evidence type="ECO:0000255" key="6">
    <source>
        <dbReference type="PROSITE-ProRule" id="PRU10028"/>
    </source>
</evidence>
<evidence type="ECO:0000256" key="7">
    <source>
        <dbReference type="SAM" id="MobiDB-lite"/>
    </source>
</evidence>
<evidence type="ECO:0000269" key="8">
    <source>
    </source>
</evidence>
<evidence type="ECO:0000269" key="9">
    <source>
    </source>
</evidence>
<evidence type="ECO:0000269" key="10">
    <source>
    </source>
</evidence>
<evidence type="ECO:0000269" key="11">
    <source>
    </source>
</evidence>
<evidence type="ECO:0000269" key="12">
    <source>
    </source>
</evidence>
<evidence type="ECO:0000269" key="13">
    <source>
    </source>
</evidence>
<evidence type="ECO:0000269" key="14">
    <source>
    </source>
</evidence>
<evidence type="ECO:0000269" key="15">
    <source>
    </source>
</evidence>
<evidence type="ECO:0000269" key="16">
    <source>
    </source>
</evidence>
<evidence type="ECO:0000269" key="17">
    <source>
    </source>
</evidence>
<evidence type="ECO:0000269" key="18">
    <source>
    </source>
</evidence>
<evidence type="ECO:0000269" key="19">
    <source>
    </source>
</evidence>
<evidence type="ECO:0000269" key="20">
    <source>
    </source>
</evidence>
<evidence type="ECO:0000269" key="21">
    <source>
    </source>
</evidence>
<evidence type="ECO:0000269" key="22">
    <source>
    </source>
</evidence>
<evidence type="ECO:0000269" key="23">
    <source>
    </source>
</evidence>
<evidence type="ECO:0000269" key="24">
    <source>
    </source>
</evidence>
<evidence type="ECO:0000269" key="25">
    <source>
    </source>
</evidence>
<evidence type="ECO:0000269" key="26">
    <source>
    </source>
</evidence>
<evidence type="ECO:0000269" key="27">
    <source>
    </source>
</evidence>
<evidence type="ECO:0000269" key="28">
    <source>
    </source>
</evidence>
<evidence type="ECO:0000269" key="29">
    <source>
    </source>
</evidence>
<evidence type="ECO:0000269" key="30">
    <source>
    </source>
</evidence>
<evidence type="ECO:0000269" key="31">
    <source>
    </source>
</evidence>
<evidence type="ECO:0000269" key="32">
    <source>
    </source>
</evidence>
<evidence type="ECO:0000269" key="33">
    <source>
    </source>
</evidence>
<evidence type="ECO:0000269" key="34">
    <source>
    </source>
</evidence>
<evidence type="ECO:0000269" key="35">
    <source>
    </source>
</evidence>
<evidence type="ECO:0000269" key="36">
    <source>
    </source>
</evidence>
<evidence type="ECO:0000269" key="37">
    <source>
    </source>
</evidence>
<evidence type="ECO:0000269" key="38">
    <source>
    </source>
</evidence>
<evidence type="ECO:0000269" key="39">
    <source>
    </source>
</evidence>
<evidence type="ECO:0000269" key="40">
    <source>
    </source>
</evidence>
<evidence type="ECO:0000269" key="41">
    <source>
    </source>
</evidence>
<evidence type="ECO:0000269" key="42">
    <source>
    </source>
</evidence>
<evidence type="ECO:0000269" key="43">
    <source>
    </source>
</evidence>
<evidence type="ECO:0000269" key="44">
    <source>
    </source>
</evidence>
<evidence type="ECO:0000269" key="45">
    <source>
    </source>
</evidence>
<evidence type="ECO:0000269" key="46">
    <source>
    </source>
</evidence>
<evidence type="ECO:0000269" key="47">
    <source>
    </source>
</evidence>
<evidence type="ECO:0000269" key="48">
    <source>
    </source>
</evidence>
<evidence type="ECO:0000269" key="49">
    <source>
    </source>
</evidence>
<evidence type="ECO:0000269" key="50">
    <source>
    </source>
</evidence>
<evidence type="ECO:0000269" key="51">
    <source>
    </source>
</evidence>
<evidence type="ECO:0000269" key="52">
    <source>
    </source>
</evidence>
<evidence type="ECO:0000269" key="53">
    <source>
    </source>
</evidence>
<evidence type="ECO:0000269" key="54">
    <source>
    </source>
</evidence>
<evidence type="ECO:0000303" key="55">
    <source>
    </source>
</evidence>
<evidence type="ECO:0000303" key="56">
    <source>
    </source>
</evidence>
<evidence type="ECO:0000305" key="57"/>
<evidence type="ECO:0000312" key="58">
    <source>
        <dbReference type="HGNC" id="HGNC:6307"/>
    </source>
</evidence>
<evidence type="ECO:0007744" key="59">
    <source>
    </source>
</evidence>
<evidence type="ECO:0007829" key="60">
    <source>
        <dbReference type="PDB" id="2M59"/>
    </source>
</evidence>
<evidence type="ECO:0007829" key="61">
    <source>
        <dbReference type="PDB" id="2X1W"/>
    </source>
</evidence>
<evidence type="ECO:0007829" key="62">
    <source>
        <dbReference type="PDB" id="2XIR"/>
    </source>
</evidence>
<evidence type="ECO:0007829" key="63">
    <source>
        <dbReference type="PDB" id="3C7Q"/>
    </source>
</evidence>
<evidence type="ECO:0007829" key="64">
    <source>
        <dbReference type="PDB" id="3KVQ"/>
    </source>
</evidence>
<evidence type="ECO:0007829" key="65">
    <source>
        <dbReference type="PDB" id="3S35"/>
    </source>
</evidence>
<evidence type="ECO:0007829" key="66">
    <source>
        <dbReference type="PDB" id="3V2A"/>
    </source>
</evidence>
<evidence type="ECO:0007829" key="67">
    <source>
        <dbReference type="PDB" id="3V6B"/>
    </source>
</evidence>
<evidence type="ECO:0007829" key="68">
    <source>
        <dbReference type="PDB" id="3VHE"/>
    </source>
</evidence>
<evidence type="ECO:0007829" key="69">
    <source>
        <dbReference type="PDB" id="3VO3"/>
    </source>
</evidence>
<evidence type="ECO:0007829" key="70">
    <source>
        <dbReference type="PDB" id="3WZD"/>
    </source>
</evidence>
<evidence type="ECO:0007829" key="71">
    <source>
        <dbReference type="PDB" id="4AGC"/>
    </source>
</evidence>
<evidence type="ECO:0007829" key="72">
    <source>
        <dbReference type="PDB" id="4ASE"/>
    </source>
</evidence>
<evidence type="ECO:0007829" key="73">
    <source>
        <dbReference type="PDB" id="5OYJ"/>
    </source>
</evidence>